<name>CP21A_HUMAN</name>
<organism>
    <name type="scientific">Homo sapiens</name>
    <name type="common">Human</name>
    <dbReference type="NCBI Taxonomy" id="9606"/>
    <lineage>
        <taxon>Eukaryota</taxon>
        <taxon>Metazoa</taxon>
        <taxon>Chordata</taxon>
        <taxon>Craniata</taxon>
        <taxon>Vertebrata</taxon>
        <taxon>Euteleostomi</taxon>
        <taxon>Mammalia</taxon>
        <taxon>Eutheria</taxon>
        <taxon>Euarchontoglires</taxon>
        <taxon>Primates</taxon>
        <taxon>Haplorrhini</taxon>
        <taxon>Catarrhini</taxon>
        <taxon>Hominidae</taxon>
        <taxon>Homo</taxon>
    </lineage>
</organism>
<sequence length="495" mass="56001">MLLLGLLLLLPLLAGARLLWNWWKLRSLHLPPLAPGFLHLLQPDLPIYLLGLTQKFGPIYRLHLGLQDVVVLNSKRTIEEAMVKKWADFAGRPEPLTYKLVSRNYPDLSLGDYSLLWKAHKKLTRSALLLGIRDSMEPVVEQLTQEFCERMRAQPGTPVAIEEEFSLLTCSIICYLTFGDKIKDDNLMPAYYKCIQEVLKTWSHWSIQIVDVIPFLRFFPNPGLRRLKQAIEKRDHIVEMQLRQHKESLVAGQWRDMMDYMLQGVAQPSMEEGSGQLLEGHVHMAAVDLLIGGTETTANTLSWAVVFLLHHPEIQQRLQEELDHELGPGASSSRVPYKDRARLPLLNATIAEVLRLRPVVPLALPHRTTRPSSISGYDIPEGTVIIPNLQGAHLDETVWERPHEFWPDRFLEPGKNSRALAFGCGARVCLGEPLARLELFVVLTRLLQAFTLLPSGDALPSLQPLPHCSVILKMQPFQVRLQPRGMGAHSPGQSQ</sequence>
<dbReference type="EC" id="1.14.14.16" evidence="33 43 45 46"/>
<dbReference type="EMBL" id="M12792">
    <property type="protein sequence ID" value="AAB59440.1"/>
    <property type="molecule type" value="Genomic_DNA"/>
</dbReference>
<dbReference type="EMBL" id="M13936">
    <property type="protein sequence ID" value="AAA59695.1"/>
    <property type="molecule type" value="Genomic_DNA"/>
</dbReference>
<dbReference type="EMBL" id="M26856">
    <property type="protein sequence ID" value="AAA52064.1"/>
    <property type="molecule type" value="Genomic_DNA"/>
</dbReference>
<dbReference type="EMBL" id="X58906">
    <property type="protein sequence ID" value="CAA41709.1"/>
    <property type="molecule type" value="Genomic_DNA"/>
</dbReference>
<dbReference type="EMBL" id="GQ222278">
    <property type="protein sequence ID" value="ACT35404.1"/>
    <property type="molecule type" value="Genomic_DNA"/>
</dbReference>
<dbReference type="EMBL" id="GQ222283">
    <property type="protein sequence ID" value="ACT35409.1"/>
    <property type="molecule type" value="Genomic_DNA"/>
</dbReference>
<dbReference type="EMBL" id="GQ222286">
    <property type="protein sequence ID" value="ACT35412.1"/>
    <property type="molecule type" value="Genomic_DNA"/>
</dbReference>
<dbReference type="EMBL" id="GQ222289">
    <property type="protein sequence ID" value="ACT35415.1"/>
    <property type="molecule type" value="Genomic_DNA"/>
</dbReference>
<dbReference type="EMBL" id="GQ222296">
    <property type="protein sequence ID" value="ACT35422.1"/>
    <property type="molecule type" value="Genomic_DNA"/>
</dbReference>
<dbReference type="EMBL" id="GQ222301">
    <property type="protein sequence ID" value="ACT35427.1"/>
    <property type="molecule type" value="Genomic_DNA"/>
</dbReference>
<dbReference type="EMBL" id="GQ222319">
    <property type="protein sequence ID" value="ACT35445.1"/>
    <property type="molecule type" value="Genomic_DNA"/>
</dbReference>
<dbReference type="EMBL" id="GQ222295">
    <property type="protein sequence ID" value="ACT35421.1"/>
    <property type="molecule type" value="Genomic_DNA"/>
</dbReference>
<dbReference type="EMBL" id="GQ222312">
    <property type="protein sequence ID" value="ACT35438.1"/>
    <property type="molecule type" value="Genomic_DNA"/>
</dbReference>
<dbReference type="EMBL" id="GQ222297">
    <property type="protein sequence ID" value="ACT35423.1"/>
    <property type="molecule type" value="Genomic_DNA"/>
</dbReference>
<dbReference type="EMBL" id="GQ222320">
    <property type="protein sequence ID" value="ACT35446.1"/>
    <property type="molecule type" value="Genomic_DNA"/>
</dbReference>
<dbReference type="EMBL" id="GQ222321">
    <property type="protein sequence ID" value="ACT35447.1"/>
    <property type="molecule type" value="Genomic_DNA"/>
</dbReference>
<dbReference type="EMBL" id="GQ222327">
    <property type="protein sequence ID" value="ACT35453.1"/>
    <property type="molecule type" value="Genomic_DNA"/>
</dbReference>
<dbReference type="EMBL" id="GQ222323">
    <property type="protein sequence ID" value="ACT35449.1"/>
    <property type="molecule type" value="Genomic_DNA"/>
</dbReference>
<dbReference type="EMBL" id="GQ222334">
    <property type="protein sequence ID" value="ACT35460.1"/>
    <property type="molecule type" value="Genomic_DNA"/>
</dbReference>
<dbReference type="EMBL" id="GQ222340">
    <property type="protein sequence ID" value="ACT35466.1"/>
    <property type="molecule type" value="Genomic_DNA"/>
</dbReference>
<dbReference type="EMBL" id="JN034391">
    <property type="protein sequence ID" value="AFK10114.1"/>
    <property type="molecule type" value="Genomic_DNA"/>
</dbReference>
<dbReference type="EMBL" id="JN034393">
    <property type="protein sequence ID" value="AFK10116.1"/>
    <property type="molecule type" value="Genomic_DNA"/>
</dbReference>
<dbReference type="EMBL" id="JN034394">
    <property type="protein sequence ID" value="AFK10117.1"/>
    <property type="molecule type" value="Genomic_DNA"/>
</dbReference>
<dbReference type="EMBL" id="JN034395">
    <property type="protein sequence ID" value="AFK10118.1"/>
    <property type="molecule type" value="Genomic_DNA"/>
</dbReference>
<dbReference type="EMBL" id="JN034396">
    <property type="protein sequence ID" value="AFK10119.1"/>
    <property type="molecule type" value="Genomic_DNA"/>
</dbReference>
<dbReference type="EMBL" id="JN034397">
    <property type="protein sequence ID" value="AFK10120.1"/>
    <property type="molecule type" value="Genomic_DNA"/>
</dbReference>
<dbReference type="EMBL" id="JN034398">
    <property type="protein sequence ID" value="AFK10121.1"/>
    <property type="molecule type" value="Genomic_DNA"/>
</dbReference>
<dbReference type="EMBL" id="JN034401">
    <property type="protein sequence ID" value="AFK10124.1"/>
    <property type="molecule type" value="Genomic_DNA"/>
</dbReference>
<dbReference type="EMBL" id="JN034403">
    <property type="protein sequence ID" value="AFK10126.1"/>
    <property type="molecule type" value="Genomic_DNA"/>
</dbReference>
<dbReference type="EMBL" id="JN034402">
    <property type="protein sequence ID" value="AFK10125.1"/>
    <property type="molecule type" value="Genomic_DNA"/>
</dbReference>
<dbReference type="EMBL" id="JN034410">
    <property type="protein sequence ID" value="AFK10133.1"/>
    <property type="molecule type" value="Genomic_DNA"/>
</dbReference>
<dbReference type="EMBL" id="JN034411">
    <property type="protein sequence ID" value="AFK10134.1"/>
    <property type="molecule type" value="Genomic_DNA"/>
</dbReference>
<dbReference type="EMBL" id="KC493622">
    <property type="protein sequence ID" value="AHA59281.1"/>
    <property type="molecule type" value="Genomic_DNA"/>
</dbReference>
<dbReference type="EMBL" id="KU302773">
    <property type="protein sequence ID" value="APT40592.1"/>
    <property type="molecule type" value="Genomic_DNA"/>
</dbReference>
<dbReference type="EMBL" id="KU302772">
    <property type="protein sequence ID" value="APT40591.1"/>
    <property type="molecule type" value="Genomic_DNA"/>
</dbReference>
<dbReference type="EMBL" id="AK054616">
    <property type="protein sequence ID" value="BAB70774.1"/>
    <property type="molecule type" value="mRNA"/>
</dbReference>
<dbReference type="EMBL" id="AK314651">
    <property type="protein sequence ID" value="BAG37212.1"/>
    <property type="molecule type" value="mRNA"/>
</dbReference>
<dbReference type="EMBL" id="AF019413">
    <property type="protein sequence ID" value="AAB67982.1"/>
    <property type="molecule type" value="Genomic_DNA"/>
</dbReference>
<dbReference type="EMBL" id="AL049547">
    <property type="protein sequence ID" value="CAB89301.1"/>
    <property type="molecule type" value="Genomic_DNA"/>
</dbReference>
<dbReference type="EMBL" id="AL645922">
    <property type="status" value="NOT_ANNOTATED_CDS"/>
    <property type="molecule type" value="Genomic_DNA"/>
</dbReference>
<dbReference type="EMBL" id="AL662828">
    <property type="status" value="NOT_ANNOTATED_CDS"/>
    <property type="molecule type" value="Genomic_DNA"/>
</dbReference>
<dbReference type="EMBL" id="AL662849">
    <property type="status" value="NOT_ANNOTATED_CDS"/>
    <property type="molecule type" value="Genomic_DNA"/>
</dbReference>
<dbReference type="EMBL" id="AL844853">
    <property type="status" value="NOT_ANNOTATED_CDS"/>
    <property type="molecule type" value="Genomic_DNA"/>
</dbReference>
<dbReference type="EMBL" id="AL929593">
    <property type="status" value="NOT_ANNOTATED_CDS"/>
    <property type="molecule type" value="Genomic_DNA"/>
</dbReference>
<dbReference type="EMBL" id="BX679671">
    <property type="status" value="NOT_ANNOTATED_CDS"/>
    <property type="molecule type" value="Genomic_DNA"/>
</dbReference>
<dbReference type="EMBL" id="CR753845">
    <property type="status" value="NOT_ANNOTATED_CDS"/>
    <property type="molecule type" value="Genomic_DNA"/>
</dbReference>
<dbReference type="EMBL" id="CR936924">
    <property type="status" value="NOT_ANNOTATED_CDS"/>
    <property type="molecule type" value="Genomic_DNA"/>
</dbReference>
<dbReference type="EMBL" id="CH471081">
    <property type="protein sequence ID" value="EAX03570.1"/>
    <property type="molecule type" value="Genomic_DNA"/>
</dbReference>
<dbReference type="EMBL" id="CH471081">
    <property type="protein sequence ID" value="EAX03571.1"/>
    <property type="molecule type" value="Genomic_DNA"/>
</dbReference>
<dbReference type="EMBL" id="BC125182">
    <property type="protein sequence ID" value="AAI25183.1"/>
    <property type="molecule type" value="mRNA"/>
</dbReference>
<dbReference type="EMBL" id="K02771">
    <property type="protein sequence ID" value="AAA59706.1"/>
    <property type="molecule type" value="Genomic_DNA"/>
</dbReference>
<dbReference type="EMBL" id="M19711">
    <property type="protein sequence ID" value="AAA83248.1"/>
    <property type="molecule type" value="Genomic_DNA"/>
</dbReference>
<dbReference type="EMBL" id="M17252">
    <property type="protein sequence ID" value="AAA59985.1"/>
    <property type="molecule type" value="mRNA"/>
</dbReference>
<dbReference type="CCDS" id="CCDS4735.1">
    <molecule id="P08686-1"/>
</dbReference>
<dbReference type="CCDS" id="CCDS47406.1">
    <molecule id="P08686-2"/>
</dbReference>
<dbReference type="PIR" id="A25446">
    <property type="entry name" value="O4HUC2"/>
</dbReference>
<dbReference type="RefSeq" id="NP_000491.4">
    <molecule id="P08686-1"/>
    <property type="nucleotide sequence ID" value="NM_000500.7"/>
</dbReference>
<dbReference type="RefSeq" id="NP_001122062.3">
    <molecule id="P08686-2"/>
    <property type="nucleotide sequence ID" value="NM_001128590.4"/>
</dbReference>
<dbReference type="RefSeq" id="XP_024308323.1">
    <molecule id="P08686-1"/>
    <property type="nucleotide sequence ID" value="XM_024452555.2"/>
</dbReference>
<dbReference type="RefSeq" id="XP_047298978.1">
    <molecule id="P08686-2"/>
    <property type="nucleotide sequence ID" value="XM_047443022.1"/>
</dbReference>
<dbReference type="PDB" id="4Y8W">
    <property type="method" value="X-ray"/>
    <property type="resolution" value="2.64 A"/>
    <property type="chains" value="A/B/C=30-495"/>
</dbReference>
<dbReference type="PDB" id="5VBU">
    <property type="method" value="X-ray"/>
    <property type="resolution" value="3.31 A"/>
    <property type="chains" value="A/B/C=30-495"/>
</dbReference>
<dbReference type="PDBsum" id="4Y8W"/>
<dbReference type="PDBsum" id="5VBU"/>
<dbReference type="SMR" id="P08686"/>
<dbReference type="BioGRID" id="107961">
    <property type="interactions" value="23"/>
</dbReference>
<dbReference type="FunCoup" id="P08686">
    <property type="interactions" value="102"/>
</dbReference>
<dbReference type="IntAct" id="P08686">
    <property type="interactions" value="2"/>
</dbReference>
<dbReference type="STRING" id="9606.ENSP00000496625"/>
<dbReference type="BindingDB" id="P08686"/>
<dbReference type="ChEMBL" id="CHEMBL2759"/>
<dbReference type="DrugBank" id="DB01026">
    <property type="generic name" value="Ketoconazole"/>
</dbReference>
<dbReference type="DrugBank" id="DB05667">
    <property type="generic name" value="Levoketoconazole"/>
</dbReference>
<dbReference type="DrugCentral" id="P08686"/>
<dbReference type="SwissLipids" id="SLP:000001618"/>
<dbReference type="PhosphoSitePlus" id="P08686"/>
<dbReference type="BioMuta" id="CYP21A2"/>
<dbReference type="DMDM" id="117275"/>
<dbReference type="MassIVE" id="P08686"/>
<dbReference type="PaxDb" id="9606-ENSP00000408860"/>
<dbReference type="PeptideAtlas" id="P08686"/>
<dbReference type="ProteomicsDB" id="52155">
    <molecule id="P08686-1"/>
</dbReference>
<dbReference type="ProteomicsDB" id="61113"/>
<dbReference type="ProteomicsDB" id="63894"/>
<dbReference type="Antibodypedia" id="53182">
    <property type="antibodies" value="325 antibodies from 29 providers"/>
</dbReference>
<dbReference type="DNASU" id="1589"/>
<dbReference type="Ensembl" id="ENST00000383321.4">
    <molecule id="P08686-2"/>
    <property type="protein sequence ID" value="ENSP00000372811.4"/>
    <property type="gene ID" value="ENSG00000206338.9"/>
</dbReference>
<dbReference type="Ensembl" id="ENST00000383322.8">
    <molecule id="P08686-1"/>
    <property type="protein sequence ID" value="ENSP00000372812.4"/>
    <property type="gene ID" value="ENSG00000206338.9"/>
</dbReference>
<dbReference type="Ensembl" id="ENST00000434026.2">
    <molecule id="P08686-2"/>
    <property type="protein sequence ID" value="ENSP00000392321.2"/>
    <property type="gene ID" value="ENSG00000232414.6"/>
</dbReference>
<dbReference type="Ensembl" id="ENST00000435122.3">
    <molecule id="P08686-2"/>
    <property type="protein sequence ID" value="ENSP00000415043.2"/>
    <property type="gene ID" value="ENSG00000231852.9"/>
</dbReference>
<dbReference type="Ensembl" id="ENST00000436607.6">
    <property type="protein sequence ID" value="ENSP00000403721.2"/>
    <property type="gene ID" value="ENSG00000235134.7"/>
</dbReference>
<dbReference type="Ensembl" id="ENST00000448314.6">
    <property type="protein sequence ID" value="ENSP00000398594.2"/>
    <property type="gene ID" value="ENSG00000198457.13"/>
</dbReference>
<dbReference type="Ensembl" id="ENST00000448478.6">
    <molecule id="P08686-1"/>
    <property type="protein sequence ID" value="ENSP00000416598.2"/>
    <property type="gene ID" value="ENSG00000232414.6"/>
</dbReference>
<dbReference type="Ensembl" id="ENST00000452386.2">
    <molecule id="P08686-2"/>
    <property type="protein sequence ID" value="ENSP00000403230.2"/>
    <property type="gene ID" value="ENSG00000233151.6"/>
</dbReference>
<dbReference type="Ensembl" id="ENST00000456152.6">
    <molecule id="P08686-1"/>
    <property type="protein sequence ID" value="ENSP00000394942.2"/>
    <property type="gene ID" value="ENSG00000233151.6"/>
</dbReference>
<dbReference type="Ensembl" id="ENST00000644719.2">
    <molecule id="P08686-1"/>
    <property type="protein sequence ID" value="ENSP00000496625.1"/>
    <property type="gene ID" value="ENSG00000231852.9"/>
</dbReference>
<dbReference type="GeneID" id="1589"/>
<dbReference type="KEGG" id="hsa:1589"/>
<dbReference type="MANE-Select" id="ENST00000644719.2">
    <property type="protein sequence ID" value="ENSP00000496625.1"/>
    <property type="RefSeq nucleotide sequence ID" value="NM_000500.9"/>
    <property type="RefSeq protein sequence ID" value="NP_000491.4"/>
</dbReference>
<dbReference type="UCSC" id="uc003nzf.3">
    <molecule id="P08686-1"/>
    <property type="organism name" value="human"/>
</dbReference>
<dbReference type="AGR" id="HGNC:2600"/>
<dbReference type="CTD" id="1589"/>
<dbReference type="DisGeNET" id="1589"/>
<dbReference type="GeneCards" id="CYP21A2"/>
<dbReference type="GeneReviews" id="CYP21A2"/>
<dbReference type="HGNC" id="HGNC:2600">
    <property type="gene designation" value="CYP21A2"/>
</dbReference>
<dbReference type="HPA" id="ENSG00000231852">
    <property type="expression patterns" value="Tissue enriched (adrenal)"/>
</dbReference>
<dbReference type="MalaCards" id="CYP21A2"/>
<dbReference type="MIM" id="201910">
    <property type="type" value="phenotype"/>
</dbReference>
<dbReference type="MIM" id="613815">
    <property type="type" value="gene"/>
</dbReference>
<dbReference type="neXtProt" id="NX_P08686"/>
<dbReference type="OpenTargets" id="ENSG00000231852"/>
<dbReference type="Orphanet" id="315306">
    <property type="disease" value="Classic congenital adrenal hyperplasia due to 21-hydroxylase deficiency, salt wasting form"/>
</dbReference>
<dbReference type="Orphanet" id="315311">
    <property type="disease" value="Classic congenital adrenal hyperplasia due to 21-hydroxylase deficiency, simple virilizing form"/>
</dbReference>
<dbReference type="PharmGKB" id="PA27096"/>
<dbReference type="VEuPathDB" id="HostDB:ENSG00000231852"/>
<dbReference type="eggNOG" id="KOG0156">
    <property type="taxonomic scope" value="Eukaryota"/>
</dbReference>
<dbReference type="GeneTree" id="ENSGT00940000158338"/>
<dbReference type="HOGENOM" id="CLU_001570_22_0_1"/>
<dbReference type="InParanoid" id="P08686"/>
<dbReference type="OMA" id="RICVHEM"/>
<dbReference type="OrthoDB" id="2789670at2759"/>
<dbReference type="PAN-GO" id="P08686">
    <property type="GO annotations" value="3 GO annotations based on evolutionary models"/>
</dbReference>
<dbReference type="PhylomeDB" id="P08686"/>
<dbReference type="TreeFam" id="TF105095"/>
<dbReference type="BioCyc" id="MetaCyc:HS09769-MONOMER"/>
<dbReference type="BRENDA" id="1.14.14.16">
    <property type="organism ID" value="2681"/>
</dbReference>
<dbReference type="PathwayCommons" id="P08686"/>
<dbReference type="Reactome" id="R-HSA-193993">
    <property type="pathway name" value="Mineralocorticoid biosynthesis"/>
</dbReference>
<dbReference type="Reactome" id="R-HSA-194002">
    <property type="pathway name" value="Glucocorticoid biosynthesis"/>
</dbReference>
<dbReference type="Reactome" id="R-HSA-211976">
    <property type="pathway name" value="Endogenous sterols"/>
</dbReference>
<dbReference type="Reactome" id="R-HSA-5579021">
    <property type="pathway name" value="Defective CYP21A2 causes AH3"/>
</dbReference>
<dbReference type="SABIO-RK" id="P08686"/>
<dbReference type="SignaLink" id="P08686"/>
<dbReference type="SIGNOR" id="P08686"/>
<dbReference type="BioGRID-ORCS" id="1589">
    <property type="hits" value="13 hits in 1141 CRISPR screens"/>
</dbReference>
<dbReference type="ChiTaRS" id="CYP21A2">
    <property type="organism name" value="human"/>
</dbReference>
<dbReference type="EvolutionaryTrace" id="P08686"/>
<dbReference type="GeneWiki" id="21-Hydroxylase"/>
<dbReference type="GenomeRNAi" id="1589"/>
<dbReference type="Pharos" id="P08686">
    <property type="development level" value="Tchem"/>
</dbReference>
<dbReference type="PRO" id="PR:P08686"/>
<dbReference type="Proteomes" id="UP000005640">
    <property type="component" value="Chromosome 6"/>
</dbReference>
<dbReference type="RNAct" id="P08686">
    <property type="molecule type" value="protein"/>
</dbReference>
<dbReference type="Bgee" id="ENSG00000231852">
    <property type="expression patterns" value="Expressed in right adrenal gland and 92 other cell types or tissues"/>
</dbReference>
<dbReference type="ExpressionAtlas" id="P08686">
    <property type="expression patterns" value="baseline and differential"/>
</dbReference>
<dbReference type="GO" id="GO:0005789">
    <property type="term" value="C:endoplasmic reticulum membrane"/>
    <property type="evidence" value="ECO:0000304"/>
    <property type="project" value="Reactome"/>
</dbReference>
<dbReference type="GO" id="GO:0103069">
    <property type="term" value="F:17-hydroxyprogesterone 21-hydroxylase activity"/>
    <property type="evidence" value="ECO:0000314"/>
    <property type="project" value="UniProtKB"/>
</dbReference>
<dbReference type="GO" id="GO:0020037">
    <property type="term" value="F:heme binding"/>
    <property type="evidence" value="ECO:0000314"/>
    <property type="project" value="UniProtKB"/>
</dbReference>
<dbReference type="GO" id="GO:0005506">
    <property type="term" value="F:iron ion binding"/>
    <property type="evidence" value="ECO:0007669"/>
    <property type="project" value="InterPro"/>
</dbReference>
<dbReference type="GO" id="GO:0106309">
    <property type="term" value="F:progesterone 21-hydroxylase activity"/>
    <property type="evidence" value="ECO:0000314"/>
    <property type="project" value="UniProtKB"/>
</dbReference>
<dbReference type="GO" id="GO:0004509">
    <property type="term" value="F:steroid 21-monooxygenase activity"/>
    <property type="evidence" value="ECO:0000318"/>
    <property type="project" value="GO_Central"/>
</dbReference>
<dbReference type="GO" id="GO:0005496">
    <property type="term" value="F:steroid binding"/>
    <property type="evidence" value="ECO:0007669"/>
    <property type="project" value="UniProtKB-KW"/>
</dbReference>
<dbReference type="GO" id="GO:0008395">
    <property type="term" value="F:steroid hydroxylase activity"/>
    <property type="evidence" value="ECO:0000315"/>
    <property type="project" value="UniProtKB"/>
</dbReference>
<dbReference type="GO" id="GO:0006704">
    <property type="term" value="P:glucocorticoid biosynthetic process"/>
    <property type="evidence" value="ECO:0000318"/>
    <property type="project" value="GO_Central"/>
</dbReference>
<dbReference type="GO" id="GO:0006705">
    <property type="term" value="P:mineralocorticoid biosynthetic process"/>
    <property type="evidence" value="ECO:0000304"/>
    <property type="project" value="Reactome"/>
</dbReference>
<dbReference type="GO" id="GO:0006694">
    <property type="term" value="P:steroid biosynthetic process"/>
    <property type="evidence" value="ECO:0000314"/>
    <property type="project" value="UniProtKB"/>
</dbReference>
<dbReference type="GO" id="GO:0008202">
    <property type="term" value="P:steroid metabolic process"/>
    <property type="evidence" value="ECO:0000315"/>
    <property type="project" value="UniProtKB"/>
</dbReference>
<dbReference type="GO" id="GO:0016125">
    <property type="term" value="P:sterol metabolic process"/>
    <property type="evidence" value="ECO:0000304"/>
    <property type="project" value="Reactome"/>
</dbReference>
<dbReference type="CDD" id="cd20674">
    <property type="entry name" value="CYP21"/>
    <property type="match status" value="1"/>
</dbReference>
<dbReference type="FunFam" id="1.10.630.10:FF:000049">
    <property type="entry name" value="steroid 21-hydroxylase isoform X1"/>
    <property type="match status" value="1"/>
</dbReference>
<dbReference type="Gene3D" id="1.10.630.10">
    <property type="entry name" value="Cytochrome P450"/>
    <property type="match status" value="1"/>
</dbReference>
<dbReference type="InterPro" id="IPR001128">
    <property type="entry name" value="Cyt_P450"/>
</dbReference>
<dbReference type="InterPro" id="IPR017972">
    <property type="entry name" value="Cyt_P450_CS"/>
</dbReference>
<dbReference type="InterPro" id="IPR002401">
    <property type="entry name" value="Cyt_P450_E_grp-I"/>
</dbReference>
<dbReference type="InterPro" id="IPR036396">
    <property type="entry name" value="Cyt_P450_sf"/>
</dbReference>
<dbReference type="PANTHER" id="PTHR24289">
    <property type="entry name" value="STEROID 17-ALPHA-HYDROXYLASE/17,20 LYASE"/>
    <property type="match status" value="1"/>
</dbReference>
<dbReference type="PANTHER" id="PTHR24289:SF17">
    <property type="entry name" value="STEROID 21-HYDROXYLASE ISOFORM X1"/>
    <property type="match status" value="1"/>
</dbReference>
<dbReference type="Pfam" id="PF00067">
    <property type="entry name" value="p450"/>
    <property type="match status" value="1"/>
</dbReference>
<dbReference type="PRINTS" id="PR00463">
    <property type="entry name" value="EP450I"/>
</dbReference>
<dbReference type="PRINTS" id="PR00385">
    <property type="entry name" value="P450"/>
</dbReference>
<dbReference type="SUPFAM" id="SSF48264">
    <property type="entry name" value="Cytochrome P450"/>
    <property type="match status" value="1"/>
</dbReference>
<dbReference type="PROSITE" id="PS00086">
    <property type="entry name" value="CYTOCHROME_P450"/>
    <property type="match status" value="1"/>
</dbReference>
<accession>P08686</accession>
<accession>A2BHY6</accession>
<accession>P04033</accession>
<accession>Q01204</accession>
<accession>Q08AG8</accession>
<accession>Q16749</accession>
<accession>Q16806</accession>
<accession>Q16874</accession>
<accession>Q5ST44</accession>
<accession>Q96NU8</accession>
<evidence type="ECO:0000250" key="1">
    <source>
        <dbReference type="UniProtKB" id="P00191"/>
    </source>
</evidence>
<evidence type="ECO:0000269" key="2">
    <source>
    </source>
</evidence>
<evidence type="ECO:0000269" key="3">
    <source>
    </source>
</evidence>
<evidence type="ECO:0000269" key="4">
    <source>
    </source>
</evidence>
<evidence type="ECO:0000269" key="5">
    <source>
    </source>
</evidence>
<evidence type="ECO:0000269" key="6">
    <source>
    </source>
</evidence>
<evidence type="ECO:0000269" key="7">
    <source>
    </source>
</evidence>
<evidence type="ECO:0000269" key="8">
    <source>
    </source>
</evidence>
<evidence type="ECO:0000269" key="9">
    <source>
    </source>
</evidence>
<evidence type="ECO:0000269" key="10">
    <source>
    </source>
</evidence>
<evidence type="ECO:0000269" key="11">
    <source>
    </source>
</evidence>
<evidence type="ECO:0000269" key="12">
    <source>
    </source>
</evidence>
<evidence type="ECO:0000269" key="13">
    <source>
    </source>
</evidence>
<evidence type="ECO:0000269" key="14">
    <source>
    </source>
</evidence>
<evidence type="ECO:0000269" key="15">
    <source>
    </source>
</evidence>
<evidence type="ECO:0000269" key="16">
    <source>
    </source>
</evidence>
<evidence type="ECO:0000269" key="17">
    <source>
    </source>
</evidence>
<evidence type="ECO:0000269" key="18">
    <source>
    </source>
</evidence>
<evidence type="ECO:0000269" key="19">
    <source>
    </source>
</evidence>
<evidence type="ECO:0000269" key="20">
    <source>
    </source>
</evidence>
<evidence type="ECO:0000269" key="21">
    <source>
    </source>
</evidence>
<evidence type="ECO:0000269" key="22">
    <source>
    </source>
</evidence>
<evidence type="ECO:0000269" key="23">
    <source>
    </source>
</evidence>
<evidence type="ECO:0000269" key="24">
    <source>
    </source>
</evidence>
<evidence type="ECO:0000269" key="25">
    <source>
    </source>
</evidence>
<evidence type="ECO:0000269" key="26">
    <source>
    </source>
</evidence>
<evidence type="ECO:0000269" key="27">
    <source>
    </source>
</evidence>
<evidence type="ECO:0000269" key="28">
    <source>
    </source>
</evidence>
<evidence type="ECO:0000269" key="29">
    <source>
    </source>
</evidence>
<evidence type="ECO:0000269" key="30">
    <source>
    </source>
</evidence>
<evidence type="ECO:0000269" key="31">
    <source>
    </source>
</evidence>
<evidence type="ECO:0000269" key="32">
    <source>
    </source>
</evidence>
<evidence type="ECO:0000269" key="33">
    <source>
    </source>
</evidence>
<evidence type="ECO:0000269" key="34">
    <source>
    </source>
</evidence>
<evidence type="ECO:0000269" key="35">
    <source>
    </source>
</evidence>
<evidence type="ECO:0000269" key="36">
    <source>
    </source>
</evidence>
<evidence type="ECO:0000269" key="37">
    <source>
    </source>
</evidence>
<evidence type="ECO:0000269" key="38">
    <source>
    </source>
</evidence>
<evidence type="ECO:0000269" key="39">
    <source>
    </source>
</evidence>
<evidence type="ECO:0000269" key="40">
    <source>
    </source>
</evidence>
<evidence type="ECO:0000269" key="41">
    <source>
    </source>
</evidence>
<evidence type="ECO:0000269" key="42">
    <source>
    </source>
</evidence>
<evidence type="ECO:0000269" key="43">
    <source>
    </source>
</evidence>
<evidence type="ECO:0000269" key="44">
    <source>
    </source>
</evidence>
<evidence type="ECO:0000269" key="45">
    <source>
    </source>
</evidence>
<evidence type="ECO:0000269" key="46">
    <source>
    </source>
</evidence>
<evidence type="ECO:0000269" key="47">
    <source>
    </source>
</evidence>
<evidence type="ECO:0000269" key="48">
    <source>
    </source>
</evidence>
<evidence type="ECO:0000269" key="49">
    <source>
    </source>
</evidence>
<evidence type="ECO:0000269" key="50">
    <source>
    </source>
</evidence>
<evidence type="ECO:0000269" key="51">
    <source>
    </source>
</evidence>
<evidence type="ECO:0000269" key="52">
    <source>
    </source>
</evidence>
<evidence type="ECO:0000269" key="53">
    <source>
    </source>
</evidence>
<evidence type="ECO:0000269" key="54">
    <source>
    </source>
</evidence>
<evidence type="ECO:0000269" key="55">
    <source>
    </source>
</evidence>
<evidence type="ECO:0000269" key="56">
    <source>
    </source>
</evidence>
<evidence type="ECO:0000269" key="57">
    <source>
    </source>
</evidence>
<evidence type="ECO:0000269" key="58">
    <source>
    </source>
</evidence>
<evidence type="ECO:0000269" key="59">
    <source>
    </source>
</evidence>
<evidence type="ECO:0000269" key="60">
    <source>
    </source>
</evidence>
<evidence type="ECO:0000269" key="61">
    <source>
    </source>
</evidence>
<evidence type="ECO:0000269" key="62">
    <source>
    </source>
</evidence>
<evidence type="ECO:0000269" key="63">
    <source>
    </source>
</evidence>
<evidence type="ECO:0000303" key="64">
    <source>
    </source>
</evidence>
<evidence type="ECO:0000303" key="65">
    <source>
    </source>
</evidence>
<evidence type="ECO:0000305" key="66"/>
<evidence type="ECO:0000305" key="67">
    <source>
    </source>
</evidence>
<evidence type="ECO:0000305" key="68">
    <source>
    </source>
</evidence>
<evidence type="ECO:0000305" key="69">
    <source>
    </source>
</evidence>
<evidence type="ECO:0000305" key="70">
    <source>
    </source>
</evidence>
<evidence type="ECO:0007744" key="71">
    <source>
        <dbReference type="PDB" id="4Y8W"/>
    </source>
</evidence>
<evidence type="ECO:0007829" key="72">
    <source>
        <dbReference type="PDB" id="4Y8W"/>
    </source>
</evidence>
<evidence type="ECO:0007829" key="73">
    <source>
        <dbReference type="PDB" id="5VBU"/>
    </source>
</evidence>
<reference key="1">
    <citation type="journal article" date="1986" name="Proc. Natl. Acad. Sci. U.S.A.">
        <title>Complete nucleotide sequence of two steroid 21-hydroxylase genes tandemly arranged in human chromosome: a pseudogene and a genuine gene.</title>
        <authorList>
            <person name="Higashi Y."/>
            <person name="Yoshioka H."/>
            <person name="Yamane M."/>
            <person name="Gotoh O."/>
            <person name="Fujii-Kuriyama Y."/>
        </authorList>
    </citation>
    <scope>NUCLEOTIDE SEQUENCE [GENOMIC DNA] (ALLELE CYP21A2*1A)</scope>
    <scope>VARIANTS LEU-6 DEL; LYS-103 AND ASN-494</scope>
</reference>
<reference key="2">
    <citation type="journal article" date="1986" name="Proc. Natl. Acad. Sci. U.S.A.">
        <title>Structure of human steroid 21-hydroxylase genes.</title>
        <authorList>
            <person name="White P.C."/>
            <person name="New M.I."/>
            <person name="Dupont B."/>
        </authorList>
    </citation>
    <scope>NUCLEOTIDE SEQUENCE [GENOMIC DNA / MRNA] (ALLELE CYP21A2*1B) (ISOFORM 1)</scope>
    <scope>VARIANTS LEU-6 DEL AND ASN-494</scope>
</reference>
<reference key="3">
    <citation type="journal article" date="1987" name="EMBO J.">
        <title>Molecular characterization of the HLA-linked steroid 21-hydroxylase B gene from an individual with congenital adrenal hyperplasia.</title>
        <authorList>
            <person name="Rodrigues N.R."/>
            <person name="Dunham I."/>
            <person name="Yu C.Y."/>
            <person name="Carroll M.C."/>
            <person name="Porter R.R."/>
            <person name="Campbell R.D."/>
        </authorList>
    </citation>
    <scope>NUCLEOTIDE SEQUENCE [GENOMIC DNA]</scope>
    <scope>VARIANT AH3 THR-269</scope>
    <scope>VARIANTS LYS-103 AND ASN-494</scope>
    <scope>INVOLVEMENT IN AH3</scope>
</reference>
<reference key="4">
    <citation type="journal article" date="1988" name="J. Clin. Invest.">
        <title>Nonsense mutation causing steroid 21-hydroxylase deficiency.</title>
        <authorList>
            <person name="Globerman H."/>
            <person name="Amor M."/>
            <person name="Parker K.L."/>
            <person name="New M.I."/>
            <person name="White P.C."/>
        </authorList>
    </citation>
    <scope>NUCLEOTIDE SEQUENCE [GENOMIC DNA]</scope>
    <scope>VARIANT AH3 LEU-282</scope>
</reference>
<reference key="5">
    <citation type="journal article" date="1992" name="Mol. Endocrinol.">
        <title>R339H and P453S: CYP21 mutations associated with nonclassic steroid 21-hydroxylase deficiency that are not apparent gene conversions.</title>
        <authorList>
            <person name="Helmberg A."/>
            <person name="Tusie-Luna M.-T."/>
            <person name="Tabarelli M."/>
            <person name="Kofler R."/>
            <person name="White P.C."/>
        </authorList>
    </citation>
    <scope>NUCLEOTIDE SEQUENCE [GENOMIC DNA]</scope>
    <scope>VARIANTS AH3 HIS-340 AND SER-454</scope>
    <source>
        <tissue>Peripheral blood</tissue>
    </source>
</reference>
<reference key="6">
    <citation type="journal article" date="2009" name="Mol. Immunol.">
        <title>Linkage analysis of the C4A/C4B copy number variation and polymorphisms of the adjacent steroid 21-hydroxylase gene in a healthy population.</title>
        <authorList>
            <person name="Blasko B."/>
            <person name="Banlaki Z."/>
            <person name="Gyapay G."/>
            <person name="Pozsonyi E."/>
            <person name="Sasvari-Szekely M."/>
            <person name="Rajczy K."/>
            <person name="Fust G."/>
            <person name="Szilagyi A."/>
        </authorList>
    </citation>
    <scope>NUCLEOTIDE SEQUENCE [GENOMIC DNA]</scope>
    <scope>VARIANTS LEU-6 DEL; LYS-103 AND ASN-494</scope>
</reference>
<reference key="7">
    <citation type="journal article" date="2013" name="Genome Biol. Evol.">
        <title>Intraspecific evolution of human RCCX copy number variation traced by haplotypes of the CYP21A2 gene.</title>
        <authorList>
            <person name="Banlaki Z."/>
            <person name="Szabo J.A."/>
            <person name="Szilagyi A."/>
            <person name="Patocs A."/>
            <person name="Prohaszka Z."/>
            <person name="Fust G."/>
            <person name="Doleschall M."/>
        </authorList>
    </citation>
    <scope>NUCLEOTIDE SEQUENCE [GENOMIC DNA]</scope>
</reference>
<reference key="8">
    <citation type="journal article" date="2013" name="PLoS ONE">
        <title>Both positive and negative selection pressures contribute to the polymorphism pattern of the duplicated human CYP21A2 gene.</title>
        <authorList>
            <person name="Szabo J.A."/>
            <person name="Szilagyi A."/>
            <person name="Doleschall Z."/>
            <person name="Patocs A."/>
            <person name="Farkas H."/>
            <person name="Prohaszka Z."/>
            <person name="Racz K."/>
            <person name="Fuest G."/>
            <person name="Doleschall M."/>
        </authorList>
    </citation>
    <scope>NUCLEOTIDE SEQUENCE [GENOMIC DNA]</scope>
</reference>
<reference key="9">
    <citation type="journal article" date="2017" name="Eur. J. Hum. Genet.">
        <title>A unique haplotype of RCCX copy number variation: from the clinics of congenital adrenal hyperplasia to evolutionary genetics.</title>
        <authorList>
            <person name="Doleschall M."/>
            <person name="Luczay A."/>
            <person name="Koncz K."/>
            <person name="Hadzsiev K."/>
            <person name="Erhardt E."/>
            <person name="Szilagyi A."/>
            <person name="Doleschall Z."/>
            <person name="Nemeth K."/>
            <person name="Toeroek D."/>
            <person name="Prohaszka Z."/>
            <person name="Gereben B."/>
            <person name="Fekete G."/>
            <person name="Glaz E."/>
            <person name="Igaz P."/>
            <person name="Korbonits M."/>
            <person name="Toth M."/>
            <person name="Racz K."/>
            <person name="Patocs A."/>
        </authorList>
    </citation>
    <scope>NUCLEOTIDE SEQUENCE [GENOMIC DNA]</scope>
</reference>
<reference key="10">
    <citation type="journal article" date="2004" name="Nat. Genet.">
        <title>Complete sequencing and characterization of 21,243 full-length human cDNAs.</title>
        <authorList>
            <person name="Ota T."/>
            <person name="Suzuki Y."/>
            <person name="Nishikawa T."/>
            <person name="Otsuki T."/>
            <person name="Sugiyama T."/>
            <person name="Irie R."/>
            <person name="Wakamatsu A."/>
            <person name="Hayashi K."/>
            <person name="Sato H."/>
            <person name="Nagai K."/>
            <person name="Kimura K."/>
            <person name="Makita H."/>
            <person name="Sekine M."/>
            <person name="Obayashi M."/>
            <person name="Nishi T."/>
            <person name="Shibahara T."/>
            <person name="Tanaka T."/>
            <person name="Ishii S."/>
            <person name="Yamamoto J."/>
            <person name="Saito K."/>
            <person name="Kawai Y."/>
            <person name="Isono Y."/>
            <person name="Nakamura Y."/>
            <person name="Nagahari K."/>
            <person name="Murakami K."/>
            <person name="Yasuda T."/>
            <person name="Iwayanagi T."/>
            <person name="Wagatsuma M."/>
            <person name="Shiratori A."/>
            <person name="Sudo H."/>
            <person name="Hosoiri T."/>
            <person name="Kaku Y."/>
            <person name="Kodaira H."/>
            <person name="Kondo H."/>
            <person name="Sugawara M."/>
            <person name="Takahashi M."/>
            <person name="Kanda K."/>
            <person name="Yokoi T."/>
            <person name="Furuya T."/>
            <person name="Kikkawa E."/>
            <person name="Omura Y."/>
            <person name="Abe K."/>
            <person name="Kamihara K."/>
            <person name="Katsuta N."/>
            <person name="Sato K."/>
            <person name="Tanikawa M."/>
            <person name="Yamazaki M."/>
            <person name="Ninomiya K."/>
            <person name="Ishibashi T."/>
            <person name="Yamashita H."/>
            <person name="Murakawa K."/>
            <person name="Fujimori K."/>
            <person name="Tanai H."/>
            <person name="Kimata M."/>
            <person name="Watanabe M."/>
            <person name="Hiraoka S."/>
            <person name="Chiba Y."/>
            <person name="Ishida S."/>
            <person name="Ono Y."/>
            <person name="Takiguchi S."/>
            <person name="Watanabe S."/>
            <person name="Yosida M."/>
            <person name="Hotuta T."/>
            <person name="Kusano J."/>
            <person name="Kanehori K."/>
            <person name="Takahashi-Fujii A."/>
            <person name="Hara H."/>
            <person name="Tanase T.-O."/>
            <person name="Nomura Y."/>
            <person name="Togiya S."/>
            <person name="Komai F."/>
            <person name="Hara R."/>
            <person name="Takeuchi K."/>
            <person name="Arita M."/>
            <person name="Imose N."/>
            <person name="Musashino K."/>
            <person name="Yuuki H."/>
            <person name="Oshima A."/>
            <person name="Sasaki N."/>
            <person name="Aotsuka S."/>
            <person name="Yoshikawa Y."/>
            <person name="Matsunawa H."/>
            <person name="Ichihara T."/>
            <person name="Shiohata N."/>
            <person name="Sano S."/>
            <person name="Moriya S."/>
            <person name="Momiyama H."/>
            <person name="Satoh N."/>
            <person name="Takami S."/>
            <person name="Terashima Y."/>
            <person name="Suzuki O."/>
            <person name="Nakagawa S."/>
            <person name="Senoh A."/>
            <person name="Mizoguchi H."/>
            <person name="Goto Y."/>
            <person name="Shimizu F."/>
            <person name="Wakebe H."/>
            <person name="Hishigaki H."/>
            <person name="Watanabe T."/>
            <person name="Sugiyama A."/>
            <person name="Takemoto M."/>
            <person name="Kawakami B."/>
            <person name="Yamazaki M."/>
            <person name="Watanabe K."/>
            <person name="Kumagai A."/>
            <person name="Itakura S."/>
            <person name="Fukuzumi Y."/>
            <person name="Fujimori Y."/>
            <person name="Komiyama M."/>
            <person name="Tashiro H."/>
            <person name="Tanigami A."/>
            <person name="Fujiwara T."/>
            <person name="Ono T."/>
            <person name="Yamada K."/>
            <person name="Fujii Y."/>
            <person name="Ozaki K."/>
            <person name="Hirao M."/>
            <person name="Ohmori Y."/>
            <person name="Kawabata A."/>
            <person name="Hikiji T."/>
            <person name="Kobatake N."/>
            <person name="Inagaki H."/>
            <person name="Ikema Y."/>
            <person name="Okamoto S."/>
            <person name="Okitani R."/>
            <person name="Kawakami T."/>
            <person name="Noguchi S."/>
            <person name="Itoh T."/>
            <person name="Shigeta K."/>
            <person name="Senba T."/>
            <person name="Matsumura K."/>
            <person name="Nakajima Y."/>
            <person name="Mizuno T."/>
            <person name="Morinaga M."/>
            <person name="Sasaki M."/>
            <person name="Togashi T."/>
            <person name="Oyama M."/>
            <person name="Hata H."/>
            <person name="Watanabe M."/>
            <person name="Komatsu T."/>
            <person name="Mizushima-Sugano J."/>
            <person name="Satoh T."/>
            <person name="Shirai Y."/>
            <person name="Takahashi Y."/>
            <person name="Nakagawa K."/>
            <person name="Okumura K."/>
            <person name="Nagase T."/>
            <person name="Nomura N."/>
            <person name="Kikuchi H."/>
            <person name="Masuho Y."/>
            <person name="Yamashita R."/>
            <person name="Nakai K."/>
            <person name="Yada T."/>
            <person name="Nakamura Y."/>
            <person name="Ohara O."/>
            <person name="Isogai T."/>
            <person name="Sugano S."/>
        </authorList>
    </citation>
    <scope>NUCLEOTIDE SEQUENCE [LARGE SCALE MRNA] (ALLELE CYP21A2*6) (ISOFORMS 1 AND 2)</scope>
    <source>
        <tissue>Adrenal gland</tissue>
    </source>
</reference>
<reference key="11">
    <citation type="journal article" date="2003" name="Genome Res.">
        <title>Analysis of the gene-dense major histocompatibility complex class III region and its comparison to mouse.</title>
        <authorList>
            <person name="Xie T."/>
            <person name="Rowen L."/>
            <person name="Aguado B."/>
            <person name="Ahearn M.E."/>
            <person name="Madan A."/>
            <person name="Qin S."/>
            <person name="Campbell R.D."/>
            <person name="Hood L."/>
        </authorList>
    </citation>
    <scope>NUCLEOTIDE SEQUENCE [LARGE SCALE GENOMIC DNA]</scope>
</reference>
<reference key="12">
    <citation type="journal article" date="2003" name="Nature">
        <title>The DNA sequence and analysis of human chromosome 6.</title>
        <authorList>
            <person name="Mungall A.J."/>
            <person name="Palmer S.A."/>
            <person name="Sims S.K."/>
            <person name="Edwards C.A."/>
            <person name="Ashurst J.L."/>
            <person name="Wilming L."/>
            <person name="Jones M.C."/>
            <person name="Horton R."/>
            <person name="Hunt S.E."/>
            <person name="Scott C.E."/>
            <person name="Gilbert J.G.R."/>
            <person name="Clamp M.E."/>
            <person name="Bethel G."/>
            <person name="Milne S."/>
            <person name="Ainscough R."/>
            <person name="Almeida J.P."/>
            <person name="Ambrose K.D."/>
            <person name="Andrews T.D."/>
            <person name="Ashwell R.I.S."/>
            <person name="Babbage A.K."/>
            <person name="Bagguley C.L."/>
            <person name="Bailey J."/>
            <person name="Banerjee R."/>
            <person name="Barker D.J."/>
            <person name="Barlow K.F."/>
            <person name="Bates K."/>
            <person name="Beare D.M."/>
            <person name="Beasley H."/>
            <person name="Beasley O."/>
            <person name="Bird C.P."/>
            <person name="Blakey S.E."/>
            <person name="Bray-Allen S."/>
            <person name="Brook J."/>
            <person name="Brown A.J."/>
            <person name="Brown J.Y."/>
            <person name="Burford D.C."/>
            <person name="Burrill W."/>
            <person name="Burton J."/>
            <person name="Carder C."/>
            <person name="Carter N.P."/>
            <person name="Chapman J.C."/>
            <person name="Clark S.Y."/>
            <person name="Clark G."/>
            <person name="Clee C.M."/>
            <person name="Clegg S."/>
            <person name="Cobley V."/>
            <person name="Collier R.E."/>
            <person name="Collins J.E."/>
            <person name="Colman L.K."/>
            <person name="Corby N.R."/>
            <person name="Coville G.J."/>
            <person name="Culley K.M."/>
            <person name="Dhami P."/>
            <person name="Davies J."/>
            <person name="Dunn M."/>
            <person name="Earthrowl M.E."/>
            <person name="Ellington A.E."/>
            <person name="Evans K.A."/>
            <person name="Faulkner L."/>
            <person name="Francis M.D."/>
            <person name="Frankish A."/>
            <person name="Frankland J."/>
            <person name="French L."/>
            <person name="Garner P."/>
            <person name="Garnett J."/>
            <person name="Ghori M.J."/>
            <person name="Gilby L.M."/>
            <person name="Gillson C.J."/>
            <person name="Glithero R.J."/>
            <person name="Grafham D.V."/>
            <person name="Grant M."/>
            <person name="Gribble S."/>
            <person name="Griffiths C."/>
            <person name="Griffiths M.N.D."/>
            <person name="Hall R."/>
            <person name="Halls K.S."/>
            <person name="Hammond S."/>
            <person name="Harley J.L."/>
            <person name="Hart E.A."/>
            <person name="Heath P.D."/>
            <person name="Heathcott R."/>
            <person name="Holmes S.J."/>
            <person name="Howden P.J."/>
            <person name="Howe K.L."/>
            <person name="Howell G.R."/>
            <person name="Huckle E."/>
            <person name="Humphray S.J."/>
            <person name="Humphries M.D."/>
            <person name="Hunt A.R."/>
            <person name="Johnson C.M."/>
            <person name="Joy A.A."/>
            <person name="Kay M."/>
            <person name="Keenan S.J."/>
            <person name="Kimberley A.M."/>
            <person name="King A."/>
            <person name="Laird G.K."/>
            <person name="Langford C."/>
            <person name="Lawlor S."/>
            <person name="Leongamornlert D.A."/>
            <person name="Leversha M."/>
            <person name="Lloyd C.R."/>
            <person name="Lloyd D.M."/>
            <person name="Loveland J.E."/>
            <person name="Lovell J."/>
            <person name="Martin S."/>
            <person name="Mashreghi-Mohammadi M."/>
            <person name="Maslen G.L."/>
            <person name="Matthews L."/>
            <person name="McCann O.T."/>
            <person name="McLaren S.J."/>
            <person name="McLay K."/>
            <person name="McMurray A."/>
            <person name="Moore M.J.F."/>
            <person name="Mullikin J.C."/>
            <person name="Niblett D."/>
            <person name="Nickerson T."/>
            <person name="Novik K.L."/>
            <person name="Oliver K."/>
            <person name="Overton-Larty E.K."/>
            <person name="Parker A."/>
            <person name="Patel R."/>
            <person name="Pearce A.V."/>
            <person name="Peck A.I."/>
            <person name="Phillimore B.J.C.T."/>
            <person name="Phillips S."/>
            <person name="Plumb R.W."/>
            <person name="Porter K.M."/>
            <person name="Ramsey Y."/>
            <person name="Ranby S.A."/>
            <person name="Rice C.M."/>
            <person name="Ross M.T."/>
            <person name="Searle S.M."/>
            <person name="Sehra H.K."/>
            <person name="Sheridan E."/>
            <person name="Skuce C.D."/>
            <person name="Smith S."/>
            <person name="Smith M."/>
            <person name="Spraggon L."/>
            <person name="Squares S.L."/>
            <person name="Steward C.A."/>
            <person name="Sycamore N."/>
            <person name="Tamlyn-Hall G."/>
            <person name="Tester J."/>
            <person name="Theaker A.J."/>
            <person name="Thomas D.W."/>
            <person name="Thorpe A."/>
            <person name="Tracey A."/>
            <person name="Tromans A."/>
            <person name="Tubby B."/>
            <person name="Wall M."/>
            <person name="Wallis J.M."/>
            <person name="West A.P."/>
            <person name="White S.S."/>
            <person name="Whitehead S.L."/>
            <person name="Whittaker H."/>
            <person name="Wild A."/>
            <person name="Willey D.J."/>
            <person name="Wilmer T.E."/>
            <person name="Wood J.M."/>
            <person name="Wray P.W."/>
            <person name="Wyatt J.C."/>
            <person name="Young L."/>
            <person name="Younger R.M."/>
            <person name="Bentley D.R."/>
            <person name="Coulson A."/>
            <person name="Durbin R.M."/>
            <person name="Hubbard T."/>
            <person name="Sulston J.E."/>
            <person name="Dunham I."/>
            <person name="Rogers J."/>
            <person name="Beck S."/>
        </authorList>
    </citation>
    <scope>NUCLEOTIDE SEQUENCE [LARGE SCALE GENOMIC DNA]</scope>
</reference>
<reference key="13">
    <citation type="submission" date="2005-07" db="EMBL/GenBank/DDBJ databases">
        <authorList>
            <person name="Mural R.J."/>
            <person name="Istrail S."/>
            <person name="Sutton G."/>
            <person name="Florea L."/>
            <person name="Halpern A.L."/>
            <person name="Mobarry C.M."/>
            <person name="Lippert R."/>
            <person name="Walenz B."/>
            <person name="Shatkay H."/>
            <person name="Dew I."/>
            <person name="Miller J.R."/>
            <person name="Flanigan M.J."/>
            <person name="Edwards N.J."/>
            <person name="Bolanos R."/>
            <person name="Fasulo D."/>
            <person name="Halldorsson B.V."/>
            <person name="Hannenhalli S."/>
            <person name="Turner R."/>
            <person name="Yooseph S."/>
            <person name="Lu F."/>
            <person name="Nusskern D.R."/>
            <person name="Shue B.C."/>
            <person name="Zheng X.H."/>
            <person name="Zhong F."/>
            <person name="Delcher A.L."/>
            <person name="Huson D.H."/>
            <person name="Kravitz S.A."/>
            <person name="Mouchard L."/>
            <person name="Reinert K."/>
            <person name="Remington K.A."/>
            <person name="Clark A.G."/>
            <person name="Waterman M.S."/>
            <person name="Eichler E.E."/>
            <person name="Adams M.D."/>
            <person name="Hunkapiller M.W."/>
            <person name="Myers E.W."/>
            <person name="Venter J.C."/>
        </authorList>
    </citation>
    <scope>NUCLEOTIDE SEQUENCE [LARGE SCALE GENOMIC DNA]</scope>
</reference>
<reference key="14">
    <citation type="journal article" date="2004" name="Genome Res.">
        <title>The status, quality, and expansion of the NIH full-length cDNA project: the Mammalian Gene Collection (MGC).</title>
        <authorList>
            <consortium name="The MGC Project Team"/>
        </authorList>
    </citation>
    <scope>NUCLEOTIDE SEQUENCE [LARGE SCALE MRNA] (ISOFORM 1)</scope>
    <scope>VARIANT LYS-103</scope>
</reference>
<reference key="15">
    <citation type="journal article" date="1993" name="Nat. Genet.">
        <title>A de novo pathological point mutation at the 21-hydroxylase locus: implications for gene conversion in the human genome.</title>
        <authorList>
            <person name="Collier S."/>
            <person name="Tassabehji M."/>
            <person name="Sinnott P."/>
            <person name="Strachan T."/>
        </authorList>
    </citation>
    <scope>NUCLEOTIDE SEQUENCE [GENOMIC DNA] OF 110-186</scope>
    <scope>VARIANT AH3 ASN-173</scope>
</reference>
<reference key="16">
    <citation type="journal article" date="1985" name="Proc. Natl. Acad. Sci. U.S.A.">
        <title>Mapping of steroid 21-hydroxylase genes adjacent to complement component C4 genes in HLA, the major histocompatibility complex in man.</title>
        <authorList>
            <person name="Carroll M.C."/>
            <person name="Campbell R.D."/>
            <person name="Porter R.R."/>
        </authorList>
    </citation>
    <scope>NUCLEOTIDE SEQUENCE [GENOMIC DNA] OF 150-183</scope>
    <scope>VARIANT AH3 ASN-173</scope>
</reference>
<reference key="17">
    <citation type="journal article" date="1988" name="Proc. Natl. Acad. Sci. U.S.A.">
        <title>Mutation in the CYP21B gene (Ile-172--&gt;Asn) causes steroid 21-hydroxylase deficiency.</title>
        <authorList>
            <person name="Amor M."/>
            <person name="Parker K.L."/>
            <person name="Globerman H."/>
            <person name="New M.I."/>
            <person name="White P.C."/>
        </authorList>
    </citation>
    <scope>NUCLEOTIDE SEQUENCE [GENOMIC DNA] OF 150-183</scope>
    <scope>VARIANT AH3 ASN-173</scope>
</reference>
<reference key="18">
    <citation type="journal article" date="1987" name="Proc. Natl. Acad. Sci. U.S.A.">
        <title>P450XXI (steroid 21-hydroxylase) gene deletions are not found in family studies of congenital adrenal hyperplasia.</title>
        <authorList>
            <person name="Matteson K.J."/>
            <person name="Phillips J.A. III"/>
            <person name="Miller W.L."/>
            <person name="Chung B.C."/>
            <person name="Orlando P.J."/>
            <person name="Frisch H."/>
            <person name="Ferrandez A."/>
            <person name="Burr I.M."/>
        </authorList>
    </citation>
    <scope>NUCLEOTIDE SEQUENCE [MRNA] OF 266-495 (ISOFORM 1)</scope>
    <scope>VARIANT AH3 LEU-282</scope>
    <scope>VARIANT ASN-494</scope>
</reference>
<reference key="19">
    <citation type="journal article" date="1999" name="Gene Ther.">
        <title>Restoration of adrenal steroidogenesis by adenovirus-mediated transfer of human cytochromeP450 21-hydroxylase into the adrenal gland of21-hydroxylase-deficient mice.</title>
        <authorList>
            <person name="Tajima T."/>
            <person name="Okada T."/>
            <person name="Ma X.M."/>
            <person name="Ramsey W."/>
            <person name="Bornstein S."/>
            <person name="Aguilera G."/>
        </authorList>
    </citation>
    <scope>FUNCTION</scope>
</reference>
<reference evidence="71" key="20">
    <citation type="journal article" date="2015" name="J. Biol. Chem.">
        <title>Human Cytochrome P450 21A2, the major steroid 21-hydroxylase: structure of the enzyme-progesterone substrate complex and rate-limiting c-h bond cleavage.</title>
        <authorList>
            <person name="Pallan P.S."/>
            <person name="Wang C."/>
            <person name="Lei L."/>
            <person name="Yoshimoto F.K."/>
            <person name="Auchus R.J."/>
            <person name="Waterman M.R."/>
            <person name="Guengerich F.P."/>
            <person name="Egli M."/>
        </authorList>
    </citation>
    <scope>X-RAY CRYSTALLOGRAPHY (2.64 ANGSTROMS) OF 30-495 IN COMPLEX WITH HEME AND PROGESTERONE</scope>
    <scope>FUNCTION</scope>
    <scope>COFACTOR</scope>
    <scope>CATALYTIC ACTIVITY</scope>
    <scope>BIOPHYSICOCHEMICAL PROPERTIES</scope>
</reference>
<reference key="21">
    <citation type="journal article" date="1991" name="J. Clin. Invest.">
        <title>Mutations of P450c21 (steroid 21-hydroxylase) at Cys428, Val281, and Ser268 result in complete, partial, or no loss of enzymatic activity, respectively.</title>
        <authorList>
            <person name="Wu D.-A."/>
            <person name="Chung B.-C."/>
        </authorList>
    </citation>
    <scope>CHARACTERIZATION OF VARIANT AH3 LEU-282</scope>
    <scope>MUTAGENESIS OF SER-269; VAL-282 AND CYS-429</scope>
</reference>
<reference key="22">
    <citation type="journal article" date="1994" name="Hum. Mutat.">
        <title>Mutations in steroid 21-hydroxylase (CYP21).</title>
        <authorList>
            <person name="White P.C."/>
            <person name="Tusie-Luna M.-T."/>
            <person name="New M.I."/>
            <person name="Speiser P.W."/>
        </authorList>
    </citation>
    <scope>POLYMORPHISM</scope>
</reference>
<reference key="23">
    <citation type="journal article" date="1988" name="N. Engl. J. Med.">
        <title>Molecular genetic analysis of nonclassic steroid 21-hydroxylase deficiency associated with HLA-B14,DR1.</title>
        <authorList>
            <person name="Speiser P.W."/>
            <person name="New M.I."/>
            <person name="White P.C."/>
        </authorList>
    </citation>
    <scope>VARIANTS AH3 LEU-212 AND LEU-282</scope>
</reference>
<reference key="24">
    <citation type="journal article" date="1990" name="J. Biol. Chem.">
        <title>A missense mutation at Ile172--&gt;Asn or Arg356--&gt;Trp causes steroid 21-hydroxylase deficiency.</title>
        <authorList>
            <person name="Chiou S.-H."/>
            <person name="Hu M.-C."/>
            <person name="Chung B.-C."/>
        </authorList>
    </citation>
    <scope>VARIANTS AH3 ASN-173 AND TRP-357</scope>
</reference>
<reference key="25">
    <citation type="journal article" date="1991" name="Hum. Genet.">
        <title>Substitution of Ile-172 to Asn in the steroid 21-hydroxylase B (P450c21B) gene in a Finnish patient with the simple virilizing form of congenital adrenal hyperplasia.</title>
        <authorList>
            <person name="Partanen J."/>
            <person name="Campbell R.D."/>
        </authorList>
    </citation>
    <scope>VARIANT AH3 ASN-173</scope>
</reference>
<reference key="26">
    <citation type="journal article" date="1991" name="Mol. Endocrinol.">
        <title>A mutation (Pro-30 to Leu) in CYP21 represents a potential nonclassic steroid 21-hydroxylase deficiency allele.</title>
        <authorList>
            <person name="Tusie-Luna M.T."/>
            <person name="Speiser P.W."/>
            <person name="Dumic M."/>
            <person name="New M.I."/>
            <person name="White P.C."/>
        </authorList>
    </citation>
    <scope>VARIANT AH3 LEU-31</scope>
    <scope>VARIANT THR-269</scope>
</reference>
<reference key="27">
    <citation type="journal article" date="1992" name="J. Clin. Invest.">
        <title>Disease expression and molecular genotype in congenital adrenal hyperplasia due to 21-hydroxylase deficiency.</title>
        <authorList>
            <person name="Speiser P.W."/>
            <person name="Dupont J."/>
            <person name="Zhu D."/>
            <person name="Serrat J."/>
            <person name="Buegeleisen M."/>
            <person name="Tusie-Luna M.-T."/>
            <person name="Lesser M."/>
            <person name="New M.I."/>
            <person name="White P.C."/>
        </authorList>
    </citation>
    <scope>VARIANTS AH3 LEU-31; ASN-173; ASN-237; GLU-238; LYS-240; LEU-282 AND TRP-357</scope>
</reference>
<reference key="28">
    <citation type="journal article" date="1992" name="Mol. Endocrinol.">
        <title>Pro-453 to Ser mutation in CYP21 is associated with nonclassic steroid 21-hydroxylase deficiency.</title>
        <authorList>
            <person name="Owerbach D."/>
            <person name="Sherman L."/>
            <person name="Ballard A.L."/>
            <person name="Azziz R."/>
        </authorList>
    </citation>
    <scope>VARIANT AH3 SER-454</scope>
</reference>
<reference key="29">
    <citation type="journal article" date="1992" name="Proc. Natl. Acad. Sci. U.S.A.">
        <title>Steroid 21-hydroxylase deficiency: three additional mutated alleles and establishment of phenotype-genotype relationships of common mutations.</title>
        <authorList>
            <person name="Wedell A."/>
            <person name="Ritzen E.M."/>
            <person name="Haglund-Stengler B."/>
            <person name="Luthman H."/>
        </authorList>
    </citation>
    <scope>VARIANTS AH3 LEU-106; SER-292 AND SER-454</scope>
</reference>
<reference key="30">
    <citation type="journal article" date="1993" name="Hum. Genet.">
        <title>Steroid 21-hydroxylase (P450c21): a new allele and spread of mutations through the pseudogene.</title>
        <authorList>
            <person name="Wedell A."/>
            <person name="Luthman H."/>
        </authorList>
    </citation>
    <scope>VARIANT AH3 PRO-484</scope>
</reference>
<reference key="31">
    <citation type="journal article" date="1995" name="Hum. Mutat.">
        <title>Screening of CYP21 gene mutations in 129 French patients affected by steroid 21-hydroxylase deficiency.</title>
        <authorList>
            <person name="Barbat B."/>
            <person name="Bogyo A."/>
            <person name="Raux-Demay M.-C."/>
            <person name="Kuttenn F."/>
            <person name="Boue J."/>
            <person name="Simon-Bouy B."/>
            <person name="Serre J.-L."/>
            <person name="Boue A."/>
            <person name="Mornet E."/>
        </authorList>
    </citation>
    <scope>VARIANTS AH3 ASN-173; ASN-237; LEU-282 AND PRO-484</scope>
</reference>
<reference key="32">
    <citation type="journal article" date="1997" name="Hum. Mutat.">
        <title>E380D: a novel point mutation of CYP21 in an HLA-homozygous patient with salt-losing congenital adrenal hyperplasia due to 21-hydroxylase deficiency.</title>
        <authorList>
            <person name="Kirby-Keyser L."/>
            <person name="Porter C.C."/>
            <person name="Donohoue P.A."/>
        </authorList>
    </citation>
    <scope>VARIANT AH3 ASP-381</scope>
</reference>
<reference key="33">
    <citation type="journal article" date="1997" name="Hum. Genet.">
        <title>A cluster of missense mutations at Arg356 of human steroid 21-hydroxylase may impair redox partner interaction.</title>
        <authorList>
            <person name="Lajic S."/>
            <person name="Levo A."/>
            <person name="Nikoshkov A."/>
            <person name="Lundberg Y."/>
            <person name="Partanen J."/>
            <person name="Wedell A."/>
        </authorList>
    </citation>
    <scope>VARIANTS AH3 PRO-357 AND GLN-357</scope>
</reference>
<reference key="34">
    <citation type="journal article" date="1997" name="J. Clin. Endocrinol. Metab.">
        <title>Synergistic effect of partially inactivating mutations in steroid 21-hydroxylase deficiency.</title>
        <authorList>
            <person name="Nikoshkov A."/>
            <person name="Lajic S."/>
            <person name="Holst M."/>
            <person name="Wedell A."/>
            <person name="Luthman H."/>
        </authorList>
    </citation>
    <scope>VARIANTS AH3 LEU-106 AND SER-454</scope>
</reference>
<reference key="35">
    <citation type="journal article" date="1998" name="Hum. Genet.">
        <title>Molecular genetic analysis of patients carrying steroid 21-hydroxylase deficiency in the Mexican population: identification of possible new mutations and high prevalence of apparent germ-line mutations.</title>
        <authorList>
            <person name="Ordonez-Sanchez M.L."/>
            <person name="Ramirez-Jimenez S."/>
            <person name="Lopez-Gutierrez A.U."/>
            <person name="Riba L."/>
            <person name="Gamboa-Cardiel S."/>
            <person name="Cerrillo-Hinojosa M."/>
            <person name="Altamirano-Bustamante N."/>
            <person name="Calzada-Leon R."/>
            <person name="Robles-Valdes C."/>
            <person name="Mendoza-Morfin F."/>
            <person name="Tusie-Luna M.T."/>
        </authorList>
    </citation>
    <scope>VARIANTS ARG-99; LYS-103; GLU-184 AND ASN-494</scope>
</reference>
<reference key="36">
    <citation type="journal article" date="1998" name="J. Biol. Chem.">
        <title>Naturally occurring mutants of human steroid 21-hydroxylase (P450c21) pinpoint residues important for enzyme activity and stability.</title>
        <authorList>
            <person name="Nikoshkov A."/>
            <person name="Lajic S."/>
            <person name="Vlamis-Gardikas A."/>
            <person name="Tranebjaerg L."/>
            <person name="Holst M."/>
            <person name="Wedell A."/>
            <person name="Luthman H."/>
        </authorList>
    </citation>
    <scope>VARIANTS AH3 GLU-197 DEL; SER-292 AND PRO-484</scope>
</reference>
<reference key="37">
    <citation type="journal article" date="1999" name="Biochem. Biophys. Res. Commun.">
        <title>Effects of missense mutations and deletions on membrane anchoring and enzyme function of human steroid 21-hydroxylase (P450c21).</title>
        <authorList>
            <person name="Lajic S."/>
            <person name="Nikoshkov A."/>
            <person name="Holst M."/>
            <person name="Wedell A."/>
        </authorList>
    </citation>
    <scope>VARIANT AH3 GLN-31</scope>
    <scope>CHARACTERIZATION OF VARIANT AH3 GLN-31</scope>
    <scope>SUBCELLULAR LOCATION</scope>
    <scope>TOPOLOGY</scope>
    <scope>DOMAIN</scope>
</reference>
<reference key="38">
    <citation type="journal article" date="1999" name="Hum. Hered.">
        <title>Mutation analysis in patients with congenital adrenal hyperplasia in the Spanish population: identification of putative novel steroid 21-hydroxylase deficiency alleles associated with the classic form of the disease.</title>
        <authorList>
            <person name="Lobato M.N."/>
            <person name="Ordonez-Sanchez M.L."/>
            <person name="Tusie-Luna M.T."/>
            <person name="Meseguer A."/>
        </authorList>
    </citation>
    <scope>VARIANTS AH3 LEU-31; VAL-91; ASN-173; ALA-179; LEU-282; CYS-292; HIS-355; TRP-357 AND SER-454</scope>
</reference>
<reference key="39">
    <citation type="journal article" date="1999" name="Hum. Mutat.">
        <title>Identification of CYP21 mutations, one novel, by single strand conformational polymorphism (SSCP) analysis.</title>
        <authorList>
            <person name="Witchel S.F."/>
            <person name="Smith R."/>
            <person name="Suda-Hartman M."/>
        </authorList>
    </citation>
    <scope>VARIANTS AH3 TYR-170; LEU-282 AND GLN-357</scope>
</reference>
<reference key="40">
    <citation type="journal article" date="1999" name="Hum. Mutat.">
        <title>Steroid 21-hydroxylase deficiency: mutational spectrum in Denmark, three novel mutations, and in vitro expression analysis.</title>
        <authorList>
            <person name="Ohlsson G."/>
            <person name="Mueller J."/>
            <person name="Skakkebaek N.E."/>
            <person name="Schwartz M."/>
        </authorList>
    </citation>
    <scope>VARIANTS AH3 LEU-31; GLU-65; ASN-173; ASN-237; LEU-282; SER-292; TRP-357 AND VAL-363</scope>
</reference>
<reference key="41">
    <citation type="journal article" date="1999" name="Hum. Mutat.">
        <title>A rapid screening for steroid 21-hydroxylase mutations in patients with congenital adrenal hyperplasia.</title>
        <authorList>
            <person name="Kapelari K."/>
            <person name="Ghanaati Z."/>
            <person name="Wollmann H."/>
            <person name="Ventz M."/>
            <person name="Ranke M.B."/>
            <person name="Kofler R."/>
            <person name="Peters H."/>
        </authorList>
    </citation>
    <scope>VARIANTS AH3 LEU-31; ASN-173; ASN-237; GLU-238; LYS-240; LEU-282 AND TRP-357</scope>
</reference>
<reference key="42">
    <citation type="journal article" date="1999" name="J. Clin. Endocrinol. Metab.">
        <title>A novel missense mutation, GLY424SER, in Brazilian patients with 21-hydroxylase deficiency.</title>
        <authorList>
            <person name="Billerbeck A.E.C."/>
            <person name="Bachega T.A.S.S."/>
            <person name="Frazatto E.T."/>
            <person name="Nishi M.Y."/>
            <person name="Goldberg A.C."/>
            <person name="Marin M.L.C."/>
            <person name="Madureira G."/>
            <person name="Monte O."/>
            <person name="Arnhold I.J.P."/>
            <person name="Mendonca B.B."/>
        </authorList>
    </citation>
    <scope>VARIANTS AH3 LEU-282; TRP-357 AND SER-425</scope>
</reference>
<reference key="43">
    <citation type="journal article" date="1999" name="J. Hum. Genet.">
        <title>Molecular analysis of Japanese patients with steroid 21-hydroxylase deficiency.</title>
        <authorList>
            <person name="Asanuma A."/>
            <person name="Ohura T."/>
            <person name="Ogawa E."/>
            <person name="Sato S."/>
            <person name="Igarashi Y."/>
            <person name="Matsubara Y."/>
            <person name="Iinuma K."/>
        </authorList>
    </citation>
    <scope>VARIANTS AH3 LEU-31; ASN-173; LEU-282 AND TRP-357</scope>
    <scope>VARIANT THR-269</scope>
</reference>
<reference key="44">
    <citation type="journal article" date="1999" name="J. Med. Genet.">
        <title>Mutation screening in British 21-hydroxylase deficiency families and development of novel microsatellite based approaches to prenatal diagnosis.</title>
        <authorList>
            <person name="Lako M."/>
            <person name="Ramsden S."/>
            <person name="Campbell R.D."/>
            <person name="Strachan T."/>
        </authorList>
    </citation>
    <scope>VARIANTS AH3 ASN-173 AND TRP-357</scope>
</reference>
<reference key="45">
    <citation type="journal article" date="1999" name="Nat. Genet.">
        <title>Characterization of single-nucleotide polymorphisms in coding regions of human genes.</title>
        <authorList>
            <person name="Cargill M."/>
            <person name="Altshuler D."/>
            <person name="Ireland J."/>
            <person name="Sklar P."/>
            <person name="Ardlie K."/>
            <person name="Patil N."/>
            <person name="Shaw N."/>
            <person name="Lane C.R."/>
            <person name="Lim E.P."/>
            <person name="Kalyanaraman N."/>
            <person name="Nemesh J."/>
            <person name="Ziaugra L."/>
            <person name="Friedland L."/>
            <person name="Rolfe A."/>
            <person name="Warrington J."/>
            <person name="Lipshutz R."/>
            <person name="Daley G.Q."/>
            <person name="Lander E.S."/>
        </authorList>
    </citation>
    <scope>VARIANTS AH3 LEU-282 AND SER-454</scope>
    <scope>VARIANT THR-269</scope>
</reference>
<reference key="46">
    <citation type="journal article" date="1999" name="Nat. Genet.">
        <authorList>
            <person name="Cargill M."/>
            <person name="Altshuler D."/>
            <person name="Ireland J."/>
            <person name="Sklar P."/>
            <person name="Ardlie K."/>
            <person name="Patil N."/>
            <person name="Shaw N."/>
            <person name="Lane C.R."/>
            <person name="Lim E.P."/>
            <person name="Kalyanaraman N."/>
            <person name="Nemesh J."/>
            <person name="Ziaugra L."/>
            <person name="Friedland L."/>
            <person name="Rolfe A."/>
            <person name="Warrington J."/>
            <person name="Lipshutz R."/>
            <person name="Daley G.Q."/>
            <person name="Lander E.S."/>
        </authorList>
    </citation>
    <scope>ERRATUM OF PUBMED:10391209</scope>
</reference>
<reference key="47">
    <citation type="journal article" date="2000" name="J. Clin. Endocrinol. Metab.">
        <title>Predicting phenotype in steroid 21-hydroxylase deficiency? Comprehensive genotyping in 155 unrelated, well defined patients from southern Germany.</title>
        <authorList>
            <person name="Krone N."/>
            <person name="Braun A."/>
            <person name="Roscher A.A."/>
            <person name="Knorr D."/>
            <person name="Schwarz H.P."/>
        </authorList>
    </citation>
    <scope>VARIANTS AH3 LEU-31; ASN-173; LEU-282; GLY-282; PHE-301; CYS-355; TRP-357 AND SER-454</scope>
</reference>
<reference key="48">
    <citation type="journal article" date="2001" name="Horm. Res.">
        <title>Molecular analysis of CYP-21 mutations for congenital adrenal hyperplasia in Singapore.</title>
        <authorList>
            <person name="Loke K.Y."/>
            <person name="Lee Y.S."/>
            <person name="Lee W.W.R."/>
            <person name="Poh L.K.S."/>
        </authorList>
    </citation>
    <scope>VARIANTS AH3 LEU-31; ASN-173; PRO-262; TRP-357 AND PRO-484</scope>
</reference>
<reference key="49">
    <citation type="journal article" date="2001" name="J. Clin. Endocrinol. Metab.">
        <title>Phenotype-genotype correlation in 56 women with nonclassical congenital adrenal hyperplasia due to 21-hydroxylase deficiency.</title>
        <authorList>
            <person name="Deneux C."/>
            <person name="Tardy V."/>
            <person name="Dib A."/>
            <person name="Mornet E."/>
            <person name="Billaud L."/>
            <person name="Charron D."/>
            <person name="Morel Y."/>
            <person name="Kuttenn F."/>
        </authorList>
    </citation>
    <scope>VARIANTS AH3 LEU-31; ASN-173; LEU-282; MET-318; TRP-357; CYS-436 AND SER-454</scope>
</reference>
<reference key="50">
    <citation type="journal article" date="2001" name="J. Clin. Endocrinol. Metab.">
        <title>Mutational spectrum of the steroid 21-hydroxylase gene in Austria: identification of a novel missense mutation.</title>
        <authorList>
            <person name="Baumgartner-Parzer S.M."/>
            <person name="Schulze E."/>
            <person name="Waldhaeusl W."/>
            <person name="Pauschenwein S."/>
            <person name="Rondot S."/>
            <person name="Nowotny P."/>
            <person name="Meyer K."/>
            <person name="Frisch H."/>
            <person name="Waldhauser F."/>
            <person name="Vierhapper H."/>
        </authorList>
    </citation>
    <scope>VARIANTS AH3 LEU-31; ASN-173; LEU-282; SER-292; TRP-357; SER-425; HIS-427; SER-454 AND PRO-484</scope>
    <scope>CHARACTERIZATION OF VARIANT AH3 HIS-427</scope>
</reference>
<reference key="51">
    <citation type="journal article" date="2001" name="Prenat. Diagn.">
        <title>Novel mutations in the human CYP21 gene.</title>
        <authorList>
            <person name="Levo A."/>
            <person name="Partanen J."/>
        </authorList>
    </citation>
    <scope>VARIANT AH3 TRP-364</scope>
</reference>
<reference key="52">
    <citation type="journal article" date="2002" name="Acta Paediatr.">
        <title>Non-classical 21-hydroxylase deficiency in children: association of adrenocorticotropic hormone-stimulated 17-hydroxyprogesterone with the risk of compound heterozygosity with severe mutations.</title>
        <authorList>
            <person name="Ezquieta B."/>
            <person name="Cueva E."/>
            <person name="Varela J."/>
            <person name="Oliver A."/>
            <person name="Fernandez J."/>
            <person name="Jariego C."/>
        </authorList>
    </citation>
    <scope>VARIANTS AH3 LEU-31; ASN-173; LEU-282; LEU-284; TRP-357 AND SER-454</scope>
</reference>
<reference key="53">
    <citation type="journal article" date="2002" name="J. Clin. Endocrinol. Metab.">
        <title>Novel mutations in CYP21 detected in individuals with hyperandrogenism.</title>
        <authorList>
            <person name="Lajic S."/>
            <person name="Clauin S."/>
            <person name="Robins T."/>
            <person name="Vexiau P."/>
            <person name="Blanche H."/>
            <person name="Bellanne-Chantelot C."/>
            <person name="Wedell A."/>
        </authorList>
    </citation>
    <scope>VARIANTS HYPERANDROGENISM MET-305; SER-376 AND SER-454</scope>
    <scope>CHARACTERIZATION OF VARIANTS HYPERANDROGENISM MET-305; SER-376 AND SER-454</scope>
</reference>
<reference key="54">
    <citation type="journal article" date="2002" name="J. Clin. Endocrinol. Metab.">
        <title>Three novel mutations in CYP21 gene in Brazilian patients with the classical form of 21-hydroxylase deficiency due to a founder effect.</title>
        <authorList>
            <person name="Billerbeck A.E.C."/>
            <person name="Mendonca B.B."/>
            <person name="Pinto E.M."/>
            <person name="Madureira G."/>
            <person name="Arnhold I.J.P."/>
            <person name="Bachega T.A.S.S."/>
        </authorList>
    </citation>
    <scope>VARIANTS AH3 CYS-409 AND SER-425</scope>
</reference>
<reference key="55">
    <citation type="journal article" date="2003" name="Eur. J. Endocrinol.">
        <title>Mutational spectrum of congenital adrenal hyperplasia in Slovenian patients: a novel Ala15Thr mutation and Pro30Leu within a larger gene conversion associated with a severe form of the disease.</title>
        <authorList>
            <person name="Dolzan V."/>
            <person name="Stopar-Obreza M."/>
            <person name="Zerjav-Tansek M."/>
            <person name="Breskvar K."/>
            <person name="Krzisnik C."/>
            <person name="Battelino T."/>
        </authorList>
    </citation>
    <scope>VARIANTS AH3 THR-16; LEU-31; ASN-173; LEU-282 AND SER-454</scope>
</reference>
<reference key="56">
    <citation type="journal article" date="2003" name="J. Clin. Endocrinol. Metab.">
        <title>Follow-up of 68 children with congenital adrenal hyperplasia due to 21-hydroxylase deficiency: relevance of genotype for management.</title>
        <authorList>
            <person name="Pinto G."/>
            <person name="Tardy V."/>
            <person name="Trivin C."/>
            <person name="Thalassinos C."/>
            <person name="Lortat-Jacob S."/>
            <person name="Nihoul-Fekete C."/>
            <person name="Morel Y."/>
            <person name="Brauner R."/>
        </authorList>
    </citation>
    <scope>VARIANTS AH3 LEU-31; LEU-63; ASN-173; LEU-282; PRO-342; TRP-357; SER-454 AND PRO-484</scope>
</reference>
<reference key="57">
    <citation type="journal article" date="2003" name="J. Clin. Endocrinol. Metab.">
        <title>CYP21 gene mutation analysis in 198 patients with 21-hydroxylase deficiency in The Netherlands: six novel mutations and a specific cluster of four mutations.</title>
        <authorList>
            <person name="Stikkelbroeck N.M."/>
            <person name="Hoefsloot L.H."/>
            <person name="de Wijs I.J."/>
            <person name="Otten B.J."/>
            <person name="Hermus A.R."/>
            <person name="Sistermans E.A."/>
        </authorList>
    </citation>
    <scope>VARIANTS AH3 ASN-173; LEU-282; ARG-292; TYR-302; TRP-357 AND GLN-484</scope>
</reference>
<reference key="58">
    <citation type="journal article" date="2004" name="J. Clin. Endocrinol. Metab.">
        <title>Molecular genetic analysis of Tunisian patients with a classic form of 21-hydroxylase deficiency: identification of four novel mutations and high prevalence of Q318X mutation.</title>
        <authorList>
            <person name="Kharrat M."/>
            <person name="Tardy V."/>
            <person name="M'Rad R."/>
            <person name="Maazoul F."/>
            <person name="Jemaa L.B."/>
            <person name="Refai M."/>
            <person name="Morel Y."/>
            <person name="Chaabouni H."/>
        </authorList>
    </citation>
    <scope>VARIANTS AH3 ASN-173; TRP-357 AND TRP-484</scope>
</reference>
<reference key="59">
    <citation type="journal article" date="2004" name="Horm. Res.">
        <title>Three novel mutations in Japanese patients with 21-hydroxylase deficiency.</title>
        <authorList>
            <person name="Usui T."/>
            <person name="Nishisho K."/>
            <person name="Kaji M."/>
            <person name="Ikuno N."/>
            <person name="Yorifuji T."/>
            <person name="Yasuda T."/>
            <person name="Kuzuya H."/>
            <person name="Shimatsu A."/>
        </authorList>
    </citation>
    <scope>VARIANT AH3 HIS-125</scope>
</reference>
<reference key="60">
    <citation type="journal article" date="2004" name="J. Clin. Endocrinol. Metab.">
        <title>Functional analysis of two recurrent amino acid substitutions in the CYP21 gene from Italian patients with congenital adrenal hyperplasia.</title>
        <authorList>
            <person name="Barbaro M."/>
            <person name="Lajic S."/>
            <person name="Baldazzi L."/>
            <person name="Balsamo A."/>
            <person name="Pirazzoli P."/>
            <person name="Cicognani A."/>
            <person name="Wedell A."/>
            <person name="Cacciari E."/>
        </authorList>
    </citation>
    <scope>VARIANTS AH3 THR-16; LEU-31; LEU-282 AND SER-483</scope>
    <scope>CHARACTERIZATION OF VARIANTS AH3 THR-16 AND SER-483</scope>
</reference>
<reference key="61">
    <citation type="journal article" date="2004" name="Mol. Genet. Metab.">
        <title>Detection and assignment of CYP21 mutations using peptide mass signature genotyping.</title>
        <authorList>
            <person name="Zeng X."/>
            <person name="Witchel S.F."/>
            <person name="Dobrowolski S.F."/>
            <person name="Moulder P.V."/>
            <person name="Jarvik J.W."/>
            <person name="Telmer C.A."/>
        </authorList>
    </citation>
    <scope>VARIANTS AH3 LEU-31; ASN-173; ASN-237; GLU-238; LYS-240; LEU-282; SER-292; GLN-357; TRP-357; TYR-366; SER-454; LEU-480 AND PRO-484</scope>
</reference>
<reference key="62">
    <citation type="journal article" date="2005" name="J. Clin. Endocrinol. Metab.">
        <title>21-Hydroxylase and 11beta-hydroxylase mutations in Romanian patients with classic congenital adrenal hyperplasia.</title>
        <authorList>
            <person name="Grigorescu Sido A."/>
            <person name="Weber M.M."/>
            <person name="Grigorescu Sido P."/>
            <person name="Clausmeyer S."/>
            <person name="Heinrich U."/>
            <person name="Schulze E."/>
        </authorList>
    </citation>
    <scope>VARIANTS AH3 LEU-31; ASN-173 AND TRP-357</scope>
</reference>
<reference key="63">
    <citation type="journal article" date="2006" name="J. Clin. Endocrinol. Metab.">
        <title>Four novel missense mutations in the CYP21A2 gene detected in Russian patients suffering from the classical form of congenital adrenal hyperplasia: identification, functional characterization, and structural analysis.</title>
        <authorList>
            <person name="Grischuk Y."/>
            <person name="Rubtsov P."/>
            <person name="Riepe F.G."/>
            <person name="Groetzinger J."/>
            <person name="Beljelarskaia S."/>
            <person name="Prassolov V."/>
            <person name="Kalintchenko N."/>
            <person name="Semitcheva T."/>
            <person name="Peterkova V."/>
            <person name="Tiulpakov A."/>
            <person name="Sippell W.G."/>
            <person name="Krone N."/>
        </authorList>
    </citation>
    <scope>VARIANTS AH3 ARG-170; ARG-179; ARG-303 AND CYS-427</scope>
    <scope>CHARACTERIZATION OF VARIANTS AH3 ARG-170; ARG-179; ARG-303; CYS-427 AND HIS-427</scope>
    <scope>FUNCTION</scope>
    <scope>CATALYTIC ACTIVITY</scope>
</reference>
<reference key="64">
    <citation type="journal article" date="2008" name="J. Clin. Endocrinol. Metab.">
        <title>p.H62L, a rare mutation of the CYP21 gene identified in two forms of 21-hydroxylase deficiency.</title>
        <authorList>
            <person name="Menassa R."/>
            <person name="Tardy V."/>
            <person name="Despert F."/>
            <person name="Bouvattier-Morel C."/>
            <person name="Brossier J.P."/>
            <person name="Cartigny M."/>
            <person name="Morel Y."/>
        </authorList>
    </citation>
    <scope>VARIANTS AH3 LEU-31; LEU-63; ASN-173; TRP-357 AND SER-454</scope>
    <scope>CHARACTERIZATION OF VARIANTS AH3 LEU-63 AND SER-454</scope>
</reference>
<reference key="65">
    <citation type="journal article" date="2008" name="J. Clin. Endocrinol. Metab.">
        <title>Inhibition of CYP21A2 enzyme activity caused by novel missense mutations identified in Brazilian and Scandinavian patients.</title>
        <authorList>
            <person name="Soardi F.C."/>
            <person name="Barbaro M."/>
            <person name="Lau I.F."/>
            <person name="Lemos-Marini S.H."/>
            <person name="Baptista M.T."/>
            <person name="Guerra-Junior G."/>
            <person name="Wedell A."/>
            <person name="Lajic S."/>
            <person name="de Mello M.P."/>
        </authorList>
    </citation>
    <scope>VARIANTS AH3 ARG-57; LEU-63; ARG-108; PRO-143; ASN-173; TRP-357; CYS-409 AND SER-454</scope>
    <scope>CHARACTERIZATION OF VARIANTS AH3 ARG-57; LEU-63; ARG-108; PRO-143; CYS-409 AND SER-454</scope>
</reference>
<reference key="66">
    <citation type="journal article" date="2008" name="J. Clin. Endocrinol. Metab.">
        <title>Functional and structural consequences of a novel point mutation in the CYP21A2 gene causing congenital adrenal hyperplasia: potential relevance of helix C for P450 oxidoreductase-21-hydroxylase interaction.</title>
        <authorList>
            <person name="Riepe F.G."/>
            <person name="Hiort O."/>
            <person name="Grotzinger J."/>
            <person name="Sippell W.G."/>
            <person name="Krone N."/>
            <person name="Holterhus P.M."/>
        </authorList>
    </citation>
    <scope>VARIANTS AH3 GLN-122 AND SER-454</scope>
    <scope>CHARACTERIZATION OF VARIANT AH3 GLN-122</scope>
</reference>
<reference key="67">
    <citation type="journal article" date="2010" name="J. Clin. Endocrinol. Metab.">
        <title>Phenotype-genotype correlations of 13 rare CYP21A2 mutations detected in 46 patients affected with 21-hydroxylase deficiency and in one carrier.</title>
        <authorList>
            <person name="Tardy V."/>
            <person name="Menassa R."/>
            <person name="Sulmont V."/>
            <person name="Lienhardt-Roussie A."/>
            <person name="Lecointre C."/>
            <person name="Brauner R."/>
            <person name="David M."/>
            <person name="Morel Y."/>
        </authorList>
    </citation>
    <scope>VARIANTS AH3 THR-78; PRO-168; ASN-173; THR-231; LYS-234; LEU-282; SER-292; ASP-293; LYS-321; PRO-342; HIS-355; TRP-357; TRP-370; CYS-409; SER-425; HIS-427 AND SER-454</scope>
    <scope>CHARACTERIZATION OF VARIANTS AH3 PRO-168; ASN-173; LEU-282; ASP-293; LYS-321; TRP-370 AND SER-425</scope>
</reference>
<reference key="68">
    <citation type="journal article" date="2011" name="J. Endocrinol. Invest.">
        <title>A large view of CYP21 locus among Sicilians and other populations: identification of a novel CYP21A2 variant in Sicily.</title>
        <authorList>
            <person name="Niceta M."/>
            <person name="Bono M."/>
            <person name="Fabiano C."/>
            <person name="Pojero F."/>
            <person name="Niceta F."/>
            <person name="Sammarco P."/>
            <person name="Corsello G."/>
            <person name="Garofalo P."/>
        </authorList>
    </citation>
    <scope>VARIANT AH3 PHE-199</scope>
</reference>
<reference key="69">
    <citation type="journal article" date="2012" name="Metabolism">
        <title>p.H282N and p.Y191H: 2 novel CYP21A2 mutations in Italian congenital adrenal hyperplasia patients.</title>
        <authorList>
            <person name="Concolino P."/>
            <person name="Mello E."/>
            <person name="Patrosso M.C."/>
            <person name="Penco S."/>
            <person name="Zuppi C."/>
            <person name="Capoluongo E."/>
        </authorList>
    </citation>
    <scope>VARIANTS AH3 HIS-192 AND ASN-283</scope>
    <scope>CHARACTERIZATION OF VARIANTS AH3 HIS-192 AND ASN-283</scope>
    <scope>FUNCTION</scope>
    <scope>CATALYTIC ACTIVITY</scope>
    <scope>BIOPHYSICOCHEMICAL PROPERTIES</scope>
</reference>
<reference key="70">
    <citation type="journal article" date="2016" name="Int. J. Endocrinol.">
        <title>Functional and structural consequences of nine CYP21A2 mutations ranging from very mild to severe effects.</title>
        <authorList>
            <person name="de Paula Michelatto D."/>
            <person name="Karlsson L."/>
            <person name="Lusa A.L."/>
            <person name="Silva C.D."/>
            <person name="Oestberg L.J."/>
            <person name="Persson B."/>
            <person name="Guerra-Junior G."/>
            <person name="de Lemos-Marini S.H."/>
            <person name="Barbaro M."/>
            <person name="de Mello M.P."/>
            <person name="Lajic S."/>
        </authorList>
    </citation>
    <scope>VARIANTS AH3 MET-13; PHE-114; 390-GLN--ALA-392 DEL AND PRO-451</scope>
    <scope>VARIANTS CYS-17; GLY-203; LEU-268 AND MET-451</scope>
    <scope>CHARACTERIZATION OF VARIANTS AH3 MET-13; PHE-114; 390-GLN--ALA-392 DEL; PRO-451 AND SER-483</scope>
    <scope>CHARACTERIZATION OF VARIANTS CYS-17; GLY-203; LEU-268 AND MET-451</scope>
    <scope>FUNCTION</scope>
    <scope>CATALYTIC ACTIVITY</scope>
    <scope>BIOPHYSICOCHEMICAL PROPERTIES</scope>
</reference>
<reference key="71">
    <citation type="journal article" date="2018" name="Mol. Med. Report.">
        <title>Identification of a novel compound heterozygous mutation of the CYP21A2 gene causing 21-hydroxylase deficiency in a Chinese pedigree.</title>
        <authorList>
            <person name="Liu J."/>
            <person name="Zhang X."/>
            <person name="Zhang H."/>
            <person name="Fang L."/>
            <person name="Xu J."/>
            <person name="Guan Q."/>
            <person name="Xu C."/>
        </authorList>
    </citation>
    <scope>VARIANT AH3 TRP-342</scope>
</reference>
<gene>
    <name type="primary">CYP21A2</name>
    <name type="synonym">CYP21</name>
    <name type="synonym">CYP21B</name>
</gene>
<proteinExistence type="evidence at protein level"/>
<comment type="function">
    <text evidence="11 33 43 45 46">A cytochrome P450 monooxygenase that plays a major role in adrenal steroidogenesis. Catalyzes the hydroxylation at C-21 of progesterone and 17alpha-hydroxyprogesterone to respectively form 11-deoxycorticosterone and 11-deoxycortisol, intermediate metabolites in the biosynthetic pathway of mineralocorticoids and glucocorticoids (PubMed:10602386, PubMed:16984992, PubMed:22014889, PubMed:25855791, PubMed:27721825). Mechanistically, uses molecular oxygen inserting one oxygen atom into a substrate, and reducing the second into a water molecule, with two electrons provided by NADPH via cytochrome P450 reductase (CPR; NADPH-ferrihemoprotein reductase) (PubMed:25855791).</text>
</comment>
<comment type="catalytic activity">
    <reaction evidence="33 43 45 46">
        <text>progesterone + reduced [NADPH--hemoprotein reductase] + O2 = 21-hydroxyprogesterone + oxidized [NADPH--hemoprotein reductase] + H2O + H(+)</text>
        <dbReference type="Rhea" id="RHEA:50304"/>
        <dbReference type="Rhea" id="RHEA-COMP:11964"/>
        <dbReference type="Rhea" id="RHEA-COMP:11965"/>
        <dbReference type="ChEBI" id="CHEBI:15377"/>
        <dbReference type="ChEBI" id="CHEBI:15378"/>
        <dbReference type="ChEBI" id="CHEBI:15379"/>
        <dbReference type="ChEBI" id="CHEBI:16973"/>
        <dbReference type="ChEBI" id="CHEBI:17026"/>
        <dbReference type="ChEBI" id="CHEBI:57618"/>
        <dbReference type="ChEBI" id="CHEBI:58210"/>
        <dbReference type="EC" id="1.14.14.16"/>
    </reaction>
    <physiologicalReaction direction="left-to-right" evidence="67 68 69 70">
        <dbReference type="Rhea" id="RHEA:50305"/>
    </physiologicalReaction>
</comment>
<comment type="catalytic activity">
    <reaction evidence="33 43 45 46">
        <text>17alpha-hydroxyprogesterone + reduced [NADPH--hemoprotein reductase] + O2 = 11-deoxycortisol + oxidized [NADPH--hemoprotein reductase] + H2O + H(+)</text>
        <dbReference type="Rhea" id="RHEA:50308"/>
        <dbReference type="Rhea" id="RHEA-COMP:11964"/>
        <dbReference type="Rhea" id="RHEA-COMP:11965"/>
        <dbReference type="ChEBI" id="CHEBI:15377"/>
        <dbReference type="ChEBI" id="CHEBI:15378"/>
        <dbReference type="ChEBI" id="CHEBI:15379"/>
        <dbReference type="ChEBI" id="CHEBI:17252"/>
        <dbReference type="ChEBI" id="CHEBI:28324"/>
        <dbReference type="ChEBI" id="CHEBI:57618"/>
        <dbReference type="ChEBI" id="CHEBI:58210"/>
        <dbReference type="EC" id="1.14.14.16"/>
    </reaction>
    <physiologicalReaction direction="left-to-right" evidence="67 68 69 70">
        <dbReference type="Rhea" id="RHEA:50309"/>
    </physiologicalReaction>
</comment>
<comment type="cofactor">
    <cofactor evidence="45">
        <name>heme b</name>
        <dbReference type="ChEBI" id="CHEBI:60344"/>
    </cofactor>
</comment>
<comment type="biophysicochemical properties">
    <kinetics>
        <KM evidence="43">1.59 uM for 17alpha-hydroxyprogesterone</KM>
        <KM evidence="46">12.5 uM for 17alpha-hydroxyprogesterone (at 37 degrees Celsius)</KM>
        <KM evidence="45">1.5 uM for 17alpha-hydroxyprogesterone</KM>
        <KM evidence="43">1.05 uM for progesterone</KM>
        <KM evidence="45">0.21 uM for progesterone</KM>
        <Vmax evidence="43">5.8 nmol/min/mg enzyme</Vmax>
        <Vmax evidence="46">0.5 nmol/min/mg enzyme (at 37 degrees Celsius)</Vmax>
    </kinetics>
</comment>
<comment type="subcellular location">
    <subcellularLocation>
        <location>Endoplasmic reticulum membrane</location>
        <topology evidence="4">Peripheral membrane protein</topology>
    </subcellularLocation>
    <subcellularLocation>
        <location evidence="4">Microsome membrane</location>
        <topology evidence="4">Peripheral membrane protein</topology>
    </subcellularLocation>
</comment>
<comment type="alternative products">
    <event type="alternative splicing"/>
    <isoform>
        <id>P08686-1</id>
        <name>1</name>
        <sequence type="displayed"/>
    </isoform>
    <isoform>
        <id>P08686-2</id>
        <name>2</name>
        <sequence type="described" ref="VSP_062040"/>
    </isoform>
</comment>
<comment type="domain">
    <text evidence="4">The leucine-rich hydrophobic amino acid N-terminal region probably helps to anchor the protein to the microsomal membrane.</text>
</comment>
<comment type="polymorphism">
    <text evidence="65">Several non deleterious alleles have been described including CYP21A2*1A, CYP21A2*1B, CYP21A2*2, CYP21A2*3, CYP21A2*4, CYP21A2*5 and CYP21A2*6. Deleterious alleles are mostly generated by recombinations between CYP21A2 and the pseudogene CYP21A1P through gene conversion. This process consists of recombination events that either delete CYP21A2 or transfer deleterious mutations from CYP21A1P to CYP21A2.</text>
</comment>
<comment type="disease" evidence="2 3 4 5 6 7 8 9 10 12 13 14 15 16 18 19 20 21 22 23 24 25 26 27 28 29 31 32 33 34 35 36 37 38 40 41 42 43 44 46 47 48 49 50 51 54 55 56 57 58 59 60 61 62">
    <disease id="DI-00043">
        <name>Adrenal hyperplasia 3</name>
        <acronym>AH3</acronym>
        <description>A form of congenital adrenal hyperplasia, a common recessive disease due to defective synthesis of cortisol. Congenital adrenal hyperplasia is characterized by androgen excess leading to ambiguous genitalia in affected females, rapid somatic growth during childhood in both sexes with premature closure of the epiphyses and short adult stature. Four clinical types: 'salt wasting' (SW, the most severe type), 'simple virilizing' (SV, less severely affected patients), with normal aldosterone biosynthesis, 'non-classic form' or late-onset (NC or LOAH) and 'cryptic' (asymptomatic).</description>
        <dbReference type="MIM" id="201910"/>
    </disease>
    <text>The disease is caused by variants affecting the gene represented in this entry.</text>
</comment>
<comment type="similarity">
    <text evidence="66">Belongs to the cytochrome P450 family.</text>
</comment>
<protein>
    <recommendedName>
        <fullName evidence="64">Steroid 21-hydroxylase</fullName>
        <ecNumber evidence="33 43 45 46">1.14.14.16</ecNumber>
    </recommendedName>
    <alternativeName>
        <fullName>21-OHase</fullName>
    </alternativeName>
    <alternativeName>
        <fullName>Cytochrome P-450c21</fullName>
    </alternativeName>
    <alternativeName>
        <fullName>Cytochrome P450 21</fullName>
    </alternativeName>
    <alternativeName>
        <fullName>Cytochrome P450 XXI</fullName>
    </alternativeName>
    <alternativeName>
        <fullName>Cytochrome P450-C21</fullName>
    </alternativeName>
    <alternativeName>
        <fullName>Cytochrome P450-C21B</fullName>
    </alternativeName>
</protein>
<feature type="chain" id="PRO_0000051976" description="Steroid 21-hydroxylase">
    <location>
        <begin position="1"/>
        <end position="495"/>
    </location>
</feature>
<feature type="binding site" evidence="45 71">
    <location>
        <position position="92"/>
    </location>
    <ligand>
        <name>heme b</name>
        <dbReference type="ChEBI" id="CHEBI:60344"/>
    </ligand>
</feature>
<feature type="binding site" evidence="45 71">
    <location>
        <position position="121"/>
    </location>
    <ligand>
        <name>heme b</name>
        <dbReference type="ChEBI" id="CHEBI:60344"/>
    </ligand>
</feature>
<feature type="binding site" evidence="1">
    <location>
        <position position="234"/>
    </location>
    <ligand>
        <name>17alpha-hydroxyprogesterone</name>
        <dbReference type="ChEBI" id="CHEBI:17252"/>
    </ligand>
</feature>
<feature type="binding site" evidence="45 71">
    <location>
        <position position="234"/>
    </location>
    <ligand>
        <name>progesterone</name>
        <dbReference type="ChEBI" id="CHEBI:17026"/>
    </ligand>
</feature>
<feature type="binding site" evidence="45 71">
    <location>
        <position position="366"/>
    </location>
    <ligand>
        <name>heme b</name>
        <dbReference type="ChEBI" id="CHEBI:60344"/>
    </ligand>
</feature>
<feature type="binding site" evidence="45 71">
    <location>
        <position position="427"/>
    </location>
    <ligand>
        <name>heme b</name>
        <dbReference type="ChEBI" id="CHEBI:60344"/>
    </ligand>
</feature>
<feature type="binding site" description="axial binding residue" evidence="45 71">
    <location>
        <position position="429"/>
    </location>
    <ligand>
        <name>heme b</name>
        <dbReference type="ChEBI" id="CHEBI:60344"/>
    </ligand>
    <ligandPart>
        <name>Fe</name>
        <dbReference type="ChEBI" id="CHEBI:18248"/>
    </ligandPart>
</feature>
<feature type="splice variant" id="VSP_062040" description="In isoform 2.">
    <location>
        <begin position="69"/>
        <end position="98"/>
    </location>
</feature>
<feature type="sequence variant" id="VAR_088451" evidence="39 52 53">
    <location>
        <position position="6"/>
    </location>
</feature>
<feature type="sequence variant" id="VAR_077582" description="In AH3; uncertain significance; non-classic form; no effect on steroid 21-monooxygenase activity." evidence="46">
    <original>L</original>
    <variation>M</variation>
    <location>
        <position position="13"/>
    </location>
</feature>
<feature type="sequence variant" id="VAR_026059" description="In AH3; uncertain significance; salt wasting form; no significant difference in steroid 21-monooxygenase activity; dbSNP:rs63749090." evidence="21 29">
    <original>A</original>
    <variation>T</variation>
    <location>
        <position position="16"/>
    </location>
</feature>
<feature type="sequence variant" id="VAR_077583" description="Decreased steroid 21-monooxygenase activity; dbSNP:rs757608533." evidence="46">
    <original>R</original>
    <variation>C</variation>
    <location>
        <position position="17"/>
    </location>
</feature>
<feature type="sequence variant" id="VAR_001281" description="In AH3; non-classic form; 50% steroid 21-monooxygenase activity; dbSNP:rs9378251." evidence="5 7 8 10 12 13 14 15 19 20 21 28 29 31 32 34 41">
    <original>P</original>
    <variation>L</variation>
    <location>
        <position position="31"/>
    </location>
</feature>
<feature type="sequence variant" id="VAR_026060" description="In AH3; does not affect membrane binding; enzyme function abolished." evidence="4">
    <original>P</original>
    <variation>Q</variation>
    <location>
        <position position="31"/>
    </location>
</feature>
<feature type="sequence variant" id="VAR_065668" description="In AH3; loss of activity; dbSNP:rs1413433421." evidence="35">
    <original>G</original>
    <variation>R</variation>
    <location>
        <position position="57"/>
    </location>
</feature>
<feature type="sequence variant" id="VAR_018364" description="In AH3; non-classic form; simple virilizing form when associated with a second mild mutation such as S-453 or L-30; activity is significantly reduced in association with S-453; dbSNP:rs9378252." evidence="20 34 35">
    <original>H</original>
    <variation>L</variation>
    <location>
        <position position="63"/>
    </location>
</feature>
<feature type="sequence variant" id="VAR_007923" description="In AH3; no activity." evidence="7">
    <original>G</original>
    <variation>E</variation>
    <location>
        <position position="65"/>
    </location>
</feature>
<feature type="sequence variant" id="VAR_065669" description="In AH3; simple virilizing form; dbSNP:rs1333278223." evidence="40">
    <original>I</original>
    <variation>T</variation>
    <location>
        <position position="78"/>
    </location>
</feature>
<feature type="sequence variant" id="VAR_026061" description="In AH3." evidence="5">
    <original>G</original>
    <variation>V</variation>
    <location>
        <position position="91"/>
    </location>
</feature>
<feature type="sequence variant" id="VAR_001282" description="In dbSNP:rs1268071078." evidence="63">
    <original>K</original>
    <variation>R</variation>
    <location>
        <position position="99"/>
    </location>
</feature>
<feature type="sequence variant" id="VAR_001283" description="In dbSNP:rs6474." evidence="30 39 48 52 63">
    <original>R</original>
    <variation>K</variation>
    <location>
        <position position="103"/>
    </location>
</feature>
<feature type="sequence variant" id="VAR_001284" description="In AH3; dbSNP:rs550051210." evidence="27 59">
    <original>P</original>
    <variation>L</variation>
    <location>
        <position position="106"/>
    </location>
</feature>
<feature type="sequence variant" id="VAR_065670" description="In AH3; loss of activity; dbSNP:rs957886272." evidence="35">
    <original>L</original>
    <variation>R</variation>
    <location>
        <position position="108"/>
    </location>
</feature>
<feature type="sequence variant" id="VAR_077584" description="In AH3; non-classic form; loss of steroid 21-monooxygenase activity; dbSNP:rs1296268275." evidence="46">
    <original>S</original>
    <variation>F</variation>
    <location>
        <position position="114"/>
    </location>
</feature>
<feature type="sequence variant" id="VAR_065671" description="In AH3; non-classic form; reduced activity; decreased affinity for 17-hydroxyprogesterone and progesterone; dbSNP:rs547552654." evidence="36">
    <original>K</original>
    <variation>Q</variation>
    <location>
        <position position="122"/>
    </location>
</feature>
<feature type="sequence variant" id="VAR_026062" description="In AH3; dbSNP:rs72552750." evidence="25">
    <original>R</original>
    <variation>H</variation>
    <location>
        <position position="125"/>
    </location>
</feature>
<feature type="sequence variant" id="VAR_065672" description="In AH3; loss of activity; dbSNP:rs755020999." evidence="35">
    <original>L</original>
    <variation>P</variation>
    <location>
        <position position="143"/>
    </location>
</feature>
<feature type="sequence variant" id="VAR_065673" description="In AH3; salt wasting form; loss of activity." evidence="40">
    <original>L</original>
    <variation>P</variation>
    <location>
        <position position="168"/>
    </location>
</feature>
<feature type="sequence variant" id="VAR_075372" description="In AH3; loss of hydroxylase activity toward 17-hydroxyprogesterone and progesterone." evidence="33">
    <original>C</original>
    <variation>R</variation>
    <location>
        <position position="170"/>
    </location>
</feature>
<feature type="sequence variant" id="VAR_001285" description="In AH3." evidence="3">
    <original>C</original>
    <variation>Y</variation>
    <location>
        <position position="170"/>
    </location>
</feature>
<feature type="sequence variant" id="VAR_001286" description="In AH3; simple virilizing form; 1-4% activity; dbSNP:rs6475." evidence="2 5 7 8 10 12 13 14 15 19 20 21 22 26 28 31 32 34 35 38 40 44 49 55 56 58">
    <original>I</original>
    <variation>N</variation>
    <location>
        <position position="173"/>
    </location>
</feature>
<feature type="sequence variant" id="VAR_026063" description="In AH3; dbSNP:rs72552751." evidence="5">
    <original>G</original>
    <variation>A</variation>
    <location>
        <position position="179"/>
    </location>
</feature>
<feature type="sequence variant" id="VAR_075373" description="In AH3; loss of enzymatic activity toward 17-hydroxyprogesterone and progesterone; dbSNP:rs772317717." evidence="33">
    <original>G</original>
    <variation>R</variation>
    <location>
        <position position="179"/>
    </location>
</feature>
<feature type="sequence variant" id="VAR_001287" description="In allele CYP21A2*4; dbSNP:rs397515531." evidence="63">
    <original>D</original>
    <variation>E</variation>
    <location>
        <position position="184"/>
    </location>
</feature>
<feature type="sequence variant" id="VAR_075374" description="In AH3; exhibits low enzymatic activity toward 17-hydroxyprogesterone and progesterone." evidence="43">
    <original>Y</original>
    <variation>H</variation>
    <location>
        <position position="192"/>
    </location>
</feature>
<feature type="sequence variant" id="VAR_008688" description="In AH3; moderate." evidence="62">
    <location>
        <position position="197"/>
    </location>
</feature>
<feature type="sequence variant" id="VAR_075375" description="In AH3; dbSNP:rs143240527." evidence="42">
    <original>L</original>
    <variation>F</variation>
    <location>
        <position position="199"/>
    </location>
</feature>
<feature type="sequence variant" id="VAR_077585" description="Decreased steroid 21-monooxygenase activity; dbSNP:rs372964292." evidence="46">
    <original>S</original>
    <variation>G</variation>
    <location>
        <position position="203"/>
    </location>
</feature>
<feature type="sequence variant" id="VAR_026064" description="In AH3; uncertain significance; non-classic form." evidence="50">
    <original>V</original>
    <variation>L</variation>
    <location>
        <position position="212"/>
    </location>
</feature>
<feature type="sequence variant" id="VAR_065674" description="In AH3." evidence="40">
    <original>I</original>
    <variation>T</variation>
    <location>
        <position position="231"/>
    </location>
</feature>
<feature type="sequence variant" id="VAR_065675" description="In AH3." evidence="40">
    <original>R</original>
    <variation>K</variation>
    <location>
        <position position="234"/>
    </location>
</feature>
<feature type="sequence variant" id="VAR_001288" description="In AH3; salt wasting form; dbSNP:rs111647200." evidence="7 8 28 32 56">
    <original>I</original>
    <variation>N</variation>
    <location>
        <position position="237"/>
    </location>
</feature>
<feature type="sequence variant" id="VAR_001289" description="In AH3; salt wasting form; dbSNP:rs12530380." evidence="8 28 32">
    <original>V</original>
    <variation>E</variation>
    <location>
        <position position="238"/>
    </location>
</feature>
<feature type="sequence variant" id="VAR_001290" description="In AH3; salt wasting form; dbSNP:rs6476." evidence="8 28 32">
    <original>M</original>
    <variation>K</variation>
    <location>
        <position position="240"/>
    </location>
</feature>
<feature type="sequence variant" id="VAR_026065" description="In AH3; dbSNP:rs750337015." evidence="14">
    <original>L</original>
    <variation>P</variation>
    <location>
        <position position="262"/>
    </location>
</feature>
<feature type="sequence variant" id="VAR_077586" description="Decreased steroid 21-monooxygenase activity; dbSNP:rs61732108 and dbSNP:rs142028935." evidence="46">
    <original>P</original>
    <variation>L</variation>
    <location>
        <position position="268"/>
    </location>
</feature>
<feature type="sequence variant" id="VAR_001291" description="In allele CYP21A2*5; dbSNP:rs6472." evidence="6 10 41 48">
    <original>S</original>
    <variation>T</variation>
    <location>
        <position position="269"/>
    </location>
</feature>
<feature type="sequence variant" id="VAR_026066" description="In AH3; salt wasting form." evidence="12">
    <original>V</original>
    <variation>G</variation>
    <location>
        <position position="282"/>
    </location>
</feature>
<feature type="sequence variant" id="VAR_001292" description="In AH3; non-classic form; 50% activity; most common variant; normal KM but 20% reduced Vmax; dbSNP:rs6471." evidence="3 5 6 7 8 9 10 12 13 15 19 20 21 22 28 29 32 37 40 50 51 54 56">
    <original>V</original>
    <variation>L</variation>
    <location>
        <position position="282"/>
    </location>
</feature>
<feature type="sequence variant" id="VAR_075376" description="In AH3; exhibits low enzymatic activity toward 17-hydroxyprogesterone and progesterone." evidence="43">
    <original>H</original>
    <variation>N</variation>
    <location>
        <position position="283"/>
    </location>
</feature>
<feature type="sequence variant" id="VAR_026067" description="In AH3." evidence="19">
    <original>M</original>
    <variation>L</variation>
    <location>
        <position position="284"/>
    </location>
</feature>
<feature type="sequence variant" id="VAR_026068" description="In AH3." evidence="5">
    <original>G</original>
    <variation>C</variation>
    <location>
        <position position="292"/>
    </location>
</feature>
<feature type="sequence variant" id="VAR_018365" description="In AH3; dbSNP:rs201552310." evidence="22">
    <original>G</original>
    <variation>R</variation>
    <location>
        <position position="292"/>
    </location>
</feature>
<feature type="sequence variant" id="VAR_001293" description="In AH3; salt wasting form; less then 1% activity; dbSNP:rs201552310." evidence="7 15 27 28 40 62">
    <original>G</original>
    <variation>S</variation>
    <location>
        <position position="292"/>
    </location>
</feature>
<feature type="sequence variant" id="VAR_065676" description="In AH3; salt wasting form; less then 1% activity." evidence="40">
    <original>G</original>
    <variation>D</variation>
    <location>
        <position position="293"/>
    </location>
</feature>
<feature type="sequence variant" id="VAR_026069" description="In AH3; salt wasting form; dbSNP:rs765001985." evidence="12">
    <original>L</original>
    <variation>F</variation>
    <location>
        <position position="301"/>
    </location>
</feature>
<feature type="sequence variant" id="VAR_018366" description="In AH3." evidence="22">
    <original>S</original>
    <variation>Y</variation>
    <location>
        <position position="302"/>
    </location>
</feature>
<feature type="sequence variant" id="VAR_075377" description="In AH3; loss of enzymatic activity toward 17-hydroxyprogesterone and progesterone." evidence="33">
    <original>W</original>
    <variation>R</variation>
    <location>
        <position position="303"/>
    </location>
</feature>
<feature type="sequence variant" id="VAR_026070" description="In hyperandrogenism; due to 21-hydroxylase deficiency; non-classic type; residual activity of 46% for conversion of 17-hydroxyprogesterone and 26% for conversion of progesterone compared with the normal enzyme; dbSNP:rs151344505." evidence="17">
    <original>V</original>
    <variation>M</variation>
    <location>
        <position position="305"/>
    </location>
</feature>
<feature type="sequence variant" id="VAR_026071" description="In AH3." evidence="13">
    <original>L</original>
    <variation>M</variation>
    <location>
        <position position="318"/>
    </location>
</feature>
<feature type="sequence variant" id="VAR_065677" description="In AH3; simple virilizing form; 4% activity." evidence="40">
    <original>E</original>
    <variation>K</variation>
    <location>
        <position position="321"/>
    </location>
</feature>
<feature type="sequence variant" id="VAR_001294" description="In AH3; non-classic form; 50% activity; dbSNP:rs72552754." evidence="24">
    <original>R</original>
    <variation>H</variation>
    <location>
        <position position="340"/>
    </location>
</feature>
<feature type="sequence variant" id="VAR_018367" description="In AH3; simple virilizing form; dbSNP:rs747079101." evidence="20 40">
    <original>R</original>
    <variation>P</variation>
    <location>
        <position position="342"/>
    </location>
</feature>
<feature type="sequence variant" id="VAR_001295" description="In AH3; non-classic form; mild; dbSNP:rs72552755." evidence="47">
    <original>R</original>
    <variation>W</variation>
    <location>
        <position position="342"/>
    </location>
</feature>
<feature type="sequence variant" id="VAR_026072" description="In AH3; salt wasting form; dbSNP:rs772900496." evidence="12">
    <original>R</original>
    <variation>C</variation>
    <location>
        <position position="355"/>
    </location>
</feature>
<feature type="sequence variant" id="VAR_026073" description="In AH3; salt wasting form; dbSNP:rs760216630." evidence="5 40">
    <original>R</original>
    <variation>H</variation>
    <location>
        <position position="355"/>
    </location>
</feature>
<feature type="sequence variant" id="VAR_001296" description="In AH3; salt wasting form; 0.15% activity." evidence="61">
    <original>R</original>
    <variation>P</variation>
    <location>
        <position position="357"/>
    </location>
</feature>
<feature type="sequence variant" id="VAR_001297" description="In AH3; simple virilizing form; mild; 0.65% activity; dbSNP:rs574370139." evidence="3 28 61">
    <original>R</original>
    <variation>Q</variation>
    <location>
        <position position="357"/>
    </location>
</feature>
<feature type="sequence variant" id="VAR_001298" description="In AH3; salt wasting form; dbSNP:rs7769409." evidence="2 5 7 8 9 10 12 13 14 15 19 20 22 26 28 31 32 34 35 40 44">
    <original>R</original>
    <variation>W</variation>
    <location>
        <position position="357"/>
    </location>
</feature>
<feature type="sequence variant" id="VAR_007924" description="In AH3; no activity." evidence="7">
    <original>A</original>
    <variation>V</variation>
    <location>
        <position position="363"/>
    </location>
</feature>
<feature type="sequence variant" id="VAR_026074" description="In AH3." evidence="16">
    <original>L</original>
    <variation>W</variation>
    <location>
        <position position="364"/>
    </location>
</feature>
<feature type="sequence variant" id="VAR_026075" description="In AH3; dbSNP:rs1330554738." evidence="28">
    <original>H</original>
    <variation>Y</variation>
    <location>
        <position position="366"/>
    </location>
</feature>
<feature type="sequence variant" id="VAR_065678" description="In AH3; dbSNP:rs781074931." evidence="40">
    <original>R</original>
    <variation>W</variation>
    <location>
        <position position="370"/>
    </location>
</feature>
<feature type="sequence variant" id="VAR_026076" description="In hyperandrogenism; due to 21-hydroxylase deficiency; almost completely abolished enzyme activity; dbSNP:rs151344506." evidence="17">
    <original>G</original>
    <variation>S</variation>
    <location>
        <position position="376"/>
    </location>
</feature>
<feature type="sequence variant" id="VAR_001299" description="In AH3; salt wasting form; dbSNP:rs72552756." evidence="60">
    <original>E</original>
    <variation>D</variation>
    <location>
        <position position="381"/>
    </location>
</feature>
<feature type="sequence variant" id="VAR_077587" description="In AH3; salt wasting form; loss of steroid 21-monooxygenase activity." evidence="46">
    <location>
        <begin position="390"/>
        <end position="392"/>
    </location>
</feature>
<feature type="sequence variant" id="VAR_026077" description="In AH3; very low residual activity; dbSNP:rs72552757." evidence="18 35 40">
    <original>R</original>
    <variation>C</variation>
    <location>
        <position position="409"/>
    </location>
</feature>
<feature type="sequence variant" id="VAR_026078" description="In AH3; very low activity; dbSNP:rs72552758." evidence="9 15 18 40">
    <original>G</original>
    <variation>S</variation>
    <location>
        <position position="425"/>
    </location>
</feature>
<feature type="sequence variant" id="VAR_075378" description="In AH3; loss of enzymatic activity toward 17-hydroxyprogesterone and progesterone; dbSNP:rs1370167869." evidence="33">
    <original>R</original>
    <variation>C</variation>
    <location>
        <position position="427"/>
    </location>
</feature>
<feature type="sequence variant" id="VAR_026079" description="In AH3; loss of enzymatic activity toward 17-hydroxyprogesterone; dbSNP:rs151344504." evidence="15 33 40">
    <original>R</original>
    <variation>H</variation>
    <location>
        <position position="427"/>
    </location>
</feature>
<feature type="sequence variant" id="VAR_026080" description="In AH3; dbSNP:rs767333157." evidence="13">
    <original>R</original>
    <variation>C</variation>
    <location>
        <position position="436"/>
    </location>
</feature>
<feature type="sequence variant" id="VAR_077588" description="Decreased steroid 21-monooxygenase activity; dbSNP:rs1319651744." evidence="46">
    <original>T</original>
    <variation>M</variation>
    <location>
        <position position="451"/>
    </location>
</feature>
<feature type="sequence variant" id="VAR_077589" description="In AH3; salt wasting form; loss of steroid 21-monooxygenase activity." evidence="46">
    <original>T</original>
    <variation>P</variation>
    <location>
        <position position="451"/>
    </location>
</feature>
<feature type="sequence variant" id="VAR_001300" description="In AH3; non-classic form; simple virilizing form when associated with L-62; 50% of activity; almost completely abolished enzyme activity when associated with S-375; dbSNP:rs6445." evidence="5 6 12 13 15 17 19 20 21 23 24 27 28 34 35 36 40 59">
    <original>P</original>
    <variation>S</variation>
    <location>
        <position position="454"/>
    </location>
</feature>
<feature type="sequence variant" id="VAR_026081" description="In AH3; dbSNP:rs184649564." evidence="28">
    <original>R</original>
    <variation>L</variation>
    <location>
        <position position="480"/>
    </location>
</feature>
<feature type="sequence variant" id="VAR_026082" description="In AH3; reduced enzyme activity to 70% of normal; dbSNP:rs776989258." evidence="29 46">
    <original>P</original>
    <variation>S</variation>
    <location>
        <position position="483"/>
    </location>
</feature>
<feature type="sequence variant" id="VAR_001301" description="In AH3; moderate; 1-2% of activity; dbSNP:rs200005406." evidence="14 15 20 28 56 57 62">
    <original>R</original>
    <variation>P</variation>
    <location>
        <position position="484"/>
    </location>
</feature>
<feature type="sequence variant" id="VAR_018368" description="In AH3; dbSNP:rs200005406." evidence="22">
    <original>R</original>
    <variation>Q</variation>
    <location>
        <position position="484"/>
    </location>
</feature>
<feature type="sequence variant" id="VAR_026083" description="In AH3; salt wasting form; dbSNP:rs759736443." evidence="26">
    <original>R</original>
    <variation>W</variation>
    <location>
        <position position="484"/>
    </location>
</feature>
<feature type="sequence variant" id="VAR_001302" description="In dbSNP:rs6473." evidence="39 48 52 53 54 63">
    <original>S</original>
    <variation>N</variation>
    <location>
        <position position="494"/>
    </location>
</feature>
<feature type="mutagenesis site" description="No effect on progesterone 21-hydroxylase activity." evidence="37">
    <original>S</original>
    <variation>C</variation>
    <variation>M</variation>
    <variation>T</variation>
    <location>
        <position position="269"/>
    </location>
</feature>
<feature type="mutagenesis site" description="Decreased 21-hydroxylase activity. Normal KM but 50% reduced Vmax." evidence="37">
    <original>V</original>
    <variation>I</variation>
    <location>
        <position position="282"/>
    </location>
</feature>
<feature type="mutagenesis site" description="Decreased 21-hydroxylase activity. Normal KM but 10% reduced Vmax." evidence="37">
    <original>V</original>
    <variation>T</variation>
    <location>
        <position position="282"/>
    </location>
</feature>
<feature type="mutagenesis site" description="Loss of progesterone 21-hydroxylase activity and loss of P450 absorption." evidence="37">
    <original>C</original>
    <variation>M</variation>
    <variation>S</variation>
    <variation>T</variation>
    <location>
        <position position="429"/>
    </location>
</feature>
<feature type="sequence conflict" description="In Ref. 10; BAB70774." evidence="66" ref="10">
    <original>G</original>
    <variation>D</variation>
    <location>
        <position position="156"/>
    </location>
</feature>
<feature type="sequence conflict" description="In Ref. 10; BAB70774." evidence="66" ref="10">
    <original>R</original>
    <variation>G</variation>
    <location>
        <position position="243"/>
    </location>
</feature>
<feature type="sequence conflict" description="In Ref. 10; BAB70774." evidence="66" ref="10">
    <original>L</original>
    <variation>Q</variation>
    <location>
        <position position="278"/>
    </location>
</feature>
<feature type="sequence conflict" description="In Ref. 10; BAB70774." evidence="66" ref="10">
    <original>V</original>
    <variation>A</variation>
    <location>
        <position position="305"/>
    </location>
</feature>
<feature type="sequence conflict" description="In Ref. 18; AAA59985." evidence="66" ref="18">
    <original>P</original>
    <variation>L</variation>
    <location>
        <position position="312"/>
    </location>
</feature>
<feature type="sequence conflict" description="In Ref. 18; AAA59985." evidence="66" ref="18">
    <original>N</original>
    <variation>I</variation>
    <location>
        <position position="347"/>
    </location>
</feature>
<feature type="sequence conflict" description="In Ref. 1; AAB59440." evidence="66" ref="1">
    <original>R</original>
    <variation>P</variation>
    <location>
        <position position="427"/>
    </location>
</feature>
<feature type="sequence conflict" description="In Ref. 1; AAB59440." evidence="66" ref="1">
    <original>E</original>
    <variation>D</variation>
    <location>
        <position position="438"/>
    </location>
</feature>
<feature type="strand" evidence="73">
    <location>
        <begin position="33"/>
        <end position="37"/>
    </location>
</feature>
<feature type="helix" evidence="72">
    <location>
        <begin position="39"/>
        <end position="41"/>
    </location>
</feature>
<feature type="strand" evidence="73">
    <location>
        <begin position="42"/>
        <end position="44"/>
    </location>
</feature>
<feature type="helix" evidence="72">
    <location>
        <begin position="45"/>
        <end position="51"/>
    </location>
</feature>
<feature type="helix" evidence="72">
    <location>
        <begin position="53"/>
        <end position="56"/>
    </location>
</feature>
<feature type="strand" evidence="72">
    <location>
        <begin position="58"/>
        <end position="64"/>
    </location>
</feature>
<feature type="strand" evidence="72">
    <location>
        <begin position="67"/>
        <end position="72"/>
    </location>
</feature>
<feature type="helix" evidence="72">
    <location>
        <begin position="75"/>
        <end position="82"/>
    </location>
</feature>
<feature type="turn" evidence="72">
    <location>
        <begin position="83"/>
        <end position="85"/>
    </location>
</feature>
<feature type="helix" evidence="72">
    <location>
        <begin position="86"/>
        <end position="89"/>
    </location>
</feature>
<feature type="helix" evidence="72">
    <location>
        <begin position="96"/>
        <end position="100"/>
    </location>
</feature>
<feature type="strand" evidence="73">
    <location>
        <begin position="103"/>
        <end position="105"/>
    </location>
</feature>
<feature type="helix" evidence="72">
    <location>
        <begin position="115"/>
        <end position="129"/>
    </location>
</feature>
<feature type="turn" evidence="72">
    <location>
        <begin position="130"/>
        <end position="135"/>
    </location>
</feature>
<feature type="helix" evidence="72">
    <location>
        <begin position="136"/>
        <end position="151"/>
    </location>
</feature>
<feature type="strand" evidence="73">
    <location>
        <begin position="154"/>
        <end position="156"/>
    </location>
</feature>
<feature type="helix" evidence="72">
    <location>
        <begin position="161"/>
        <end position="178"/>
    </location>
</feature>
<feature type="helix" evidence="72">
    <location>
        <begin position="180"/>
        <end position="183"/>
    </location>
</feature>
<feature type="turn" evidence="72">
    <location>
        <begin position="184"/>
        <end position="186"/>
    </location>
</feature>
<feature type="helix" evidence="72">
    <location>
        <begin position="188"/>
        <end position="202"/>
    </location>
</feature>
<feature type="helix" evidence="72">
    <location>
        <begin position="205"/>
        <end position="212"/>
    </location>
</feature>
<feature type="helix" evidence="72">
    <location>
        <begin position="214"/>
        <end position="217"/>
    </location>
</feature>
<feature type="helix" evidence="72">
    <location>
        <begin position="224"/>
        <end position="246"/>
    </location>
</feature>
<feature type="helix" evidence="72">
    <location>
        <begin position="257"/>
        <end position="262"/>
    </location>
</feature>
<feature type="helix" evidence="72">
    <location>
        <begin position="279"/>
        <end position="310"/>
    </location>
</feature>
<feature type="helix" evidence="72">
    <location>
        <begin position="312"/>
        <end position="325"/>
    </location>
</feature>
<feature type="turn" evidence="72">
    <location>
        <begin position="337"/>
        <end position="339"/>
    </location>
</feature>
<feature type="helix" evidence="72">
    <location>
        <begin position="344"/>
        <end position="356"/>
    </location>
</feature>
<feature type="strand" evidence="72">
    <location>
        <begin position="370"/>
        <end position="374"/>
    </location>
</feature>
<feature type="strand" evidence="72">
    <location>
        <begin position="377"/>
        <end position="379"/>
    </location>
</feature>
<feature type="strand" evidence="72">
    <location>
        <begin position="384"/>
        <end position="387"/>
    </location>
</feature>
<feature type="helix" evidence="72">
    <location>
        <begin position="389"/>
        <end position="393"/>
    </location>
</feature>
<feature type="turn" evidence="72">
    <location>
        <begin position="396"/>
        <end position="398"/>
    </location>
</feature>
<feature type="strand" evidence="72">
    <location>
        <begin position="399"/>
        <end position="401"/>
    </location>
</feature>
<feature type="helix" evidence="72">
    <location>
        <begin position="407"/>
        <end position="410"/>
    </location>
</feature>
<feature type="helix" evidence="73">
    <location>
        <begin position="425"/>
        <end position="427"/>
    </location>
</feature>
<feature type="helix" evidence="72">
    <location>
        <begin position="432"/>
        <end position="447"/>
    </location>
</feature>
<feature type="strand" evidence="72">
    <location>
        <begin position="450"/>
        <end position="458"/>
    </location>
</feature>
<feature type="strand" evidence="72">
    <location>
        <begin position="479"/>
        <end position="483"/>
    </location>
</feature>
<keyword id="KW-0002">3D-structure</keyword>
<keyword id="KW-0025">Alternative splicing</keyword>
<keyword id="KW-0954">Congenital adrenal hyperplasia</keyword>
<keyword id="KW-0225">Disease variant</keyword>
<keyword id="KW-0256">Endoplasmic reticulum</keyword>
<keyword id="KW-0349">Heme</keyword>
<keyword id="KW-0408">Iron</keyword>
<keyword id="KW-0443">Lipid metabolism</keyword>
<keyword id="KW-0446">Lipid-binding</keyword>
<keyword id="KW-0472">Membrane</keyword>
<keyword id="KW-0479">Metal-binding</keyword>
<keyword id="KW-0492">Microsome</keyword>
<keyword id="KW-0503">Monooxygenase</keyword>
<keyword id="KW-0560">Oxidoreductase</keyword>
<keyword id="KW-1267">Proteomics identification</keyword>
<keyword id="KW-1185">Reference proteome</keyword>
<keyword id="KW-0754">Steroid-binding</keyword>
<keyword id="KW-0755">Steroidogenesis</keyword>